<evidence type="ECO:0000250" key="1">
    <source>
        <dbReference type="UniProtKB" id="P30999"/>
    </source>
</evidence>
<evidence type="ECO:0000255" key="2"/>
<evidence type="ECO:0000256" key="3">
    <source>
        <dbReference type="SAM" id="MobiDB-lite"/>
    </source>
</evidence>
<evidence type="ECO:0000269" key="4">
    <source>
    </source>
</evidence>
<evidence type="ECO:0000269" key="5">
    <source>
    </source>
</evidence>
<evidence type="ECO:0000269" key="6">
    <source>
    </source>
</evidence>
<evidence type="ECO:0000269" key="7">
    <source>
    </source>
</evidence>
<evidence type="ECO:0000269" key="8">
    <source>
    </source>
</evidence>
<evidence type="ECO:0000269" key="9">
    <source>
    </source>
</evidence>
<evidence type="ECO:0000269" key="10">
    <source>
    </source>
</evidence>
<evidence type="ECO:0000269" key="11">
    <source>
    </source>
</evidence>
<evidence type="ECO:0000269" key="12">
    <source>
    </source>
</evidence>
<evidence type="ECO:0000269" key="13">
    <source>
    </source>
</evidence>
<evidence type="ECO:0000269" key="14">
    <source>
    </source>
</evidence>
<evidence type="ECO:0000269" key="15">
    <source>
    </source>
</evidence>
<evidence type="ECO:0000269" key="16">
    <source>
    </source>
</evidence>
<evidence type="ECO:0000269" key="17">
    <source>
    </source>
</evidence>
<evidence type="ECO:0000269" key="18">
    <source>
    </source>
</evidence>
<evidence type="ECO:0000269" key="19">
    <source>
    </source>
</evidence>
<evidence type="ECO:0000269" key="20">
    <source>
    </source>
</evidence>
<evidence type="ECO:0000269" key="21">
    <source>
    </source>
</evidence>
<evidence type="ECO:0000269" key="22">
    <source>
    </source>
</evidence>
<evidence type="ECO:0000269" key="23">
    <source ref="4"/>
</evidence>
<evidence type="ECO:0000303" key="24">
    <source>
    </source>
</evidence>
<evidence type="ECO:0000303" key="25">
    <source>
    </source>
</evidence>
<evidence type="ECO:0000303" key="26">
    <source>
    </source>
</evidence>
<evidence type="ECO:0000303" key="27">
    <source>
    </source>
</evidence>
<evidence type="ECO:0000305" key="28"/>
<evidence type="ECO:0000312" key="29">
    <source>
        <dbReference type="HGNC" id="HGNC:2515"/>
    </source>
</evidence>
<evidence type="ECO:0007744" key="30">
    <source>
    </source>
</evidence>
<evidence type="ECO:0007744" key="31">
    <source>
    </source>
</evidence>
<evidence type="ECO:0007744" key="32">
    <source>
    </source>
</evidence>
<evidence type="ECO:0007744" key="33">
    <source>
    </source>
</evidence>
<evidence type="ECO:0007744" key="34">
    <source>
    </source>
</evidence>
<evidence type="ECO:0007744" key="35">
    <source>
    </source>
</evidence>
<evidence type="ECO:0007744" key="36">
    <source>
    </source>
</evidence>
<evidence type="ECO:0007744" key="37">
    <source>
    </source>
</evidence>
<evidence type="ECO:0007744" key="38">
    <source>
    </source>
</evidence>
<evidence type="ECO:0007744" key="39">
    <source>
    </source>
</evidence>
<evidence type="ECO:0007829" key="40">
    <source>
        <dbReference type="PDB" id="3L6X"/>
    </source>
</evidence>
<comment type="function">
    <text evidence="4 7 13 14 17">Key regulator of cell-cell adhesion that associates with and regulates the cell adhesion properties of both C-, E- and N-cadherins, being critical for their surface stability (PubMed:14610055, PubMed:20371349). Promotes localization and retention of DSG3 at cell-cell junctions, via its interaction with DSG3 (PubMed:18343367). Beside cell-cell adhesion, regulates gene transcription through several transcription factors including ZBTB33/Kaiso2 and GLIS2, and the activity of Rho family GTPases and downstream cytoskeletal dynamics (PubMed:10207085, PubMed:20371349). Implicated both in cell transformation by SRC and in ligand-induced receptor signaling through the EGF, PDGF, CSF-1 and ERBB2 receptors (PubMed:17344476).</text>
</comment>
<comment type="subunit">
    <text evidence="1 4 9 10 13 14 16 17 19 20 22">Belongs to a multiprotein cell-cell adhesion complex that also contains E-cadherin/CDH1, alpha-catenin/CTNNA1, beta-catenin/CTNNB1, and gamma-catenin/JUP (PubMed:15240885, PubMed:20371349). Component of a cadherin:catenin adhesion complex composed of at least of CDH26, beta-catenin/CTNNB1, alpha-catenin/CTNNA1 and p120 catenin/CTNND1 (PubMed:28051089). Binds to the C-terminal fragment of PSEN1 and mutually competes for CDH1. Interacts with ZBTB33 (PubMed:10207085). Interacts with GLIS2 (PubMed:17344476). Interacts with FER (PubMed:7623846). Interacts with NANOS1 (via N-terminal region) (PubMed:17047063). Interacts (via N-terminus) with GNA12; the interaction regulates CDH1-mediated cell-cell adhesion (PubMed:15240885). Interacts with GNA13 (PubMed:15240885). Interacts with CCDC85B (PubMed:25009281). Interacts with PLPP3; negatively regulates the PLPP3-mediated stabilization of CTNNB1 (PubMed:20123964). Interacts with DSG3; the interaction facilitates DSG3 localization and retention at cell-cell junctions (PubMed:18343367). Interacts with CTNND1/p120-catenin; the interaction controls CADH5 endocytosis (By similarity).</text>
</comment>
<comment type="interaction">
    <interactant intactId="EBI-701927">
        <id>O60716</id>
    </interactant>
    <interactant intactId="EBI-727477">
        <id>P12830</id>
        <label>CDH1</label>
    </interactant>
    <organismsDiffer>false</organismsDiffer>
    <experiments>9</experiments>
</comment>
<comment type="interaction">
    <interactant intactId="EBI-701927">
        <id>O60716</id>
    </interactant>
    <interactant intactId="EBI-2256711">
        <id>P19022</id>
        <label>CDH2</label>
    </interactant>
    <organismsDiffer>false</organismsDiffer>
    <experiments>2</experiments>
</comment>
<comment type="interaction">
    <interactant intactId="EBI-701927">
        <id>O60716</id>
    </interactant>
    <interactant intactId="EBI-297353">
        <id>P00533</id>
        <label>EGFR</label>
    </interactant>
    <organismsDiffer>false</organismsDiffer>
    <experiments>5</experiments>
</comment>
<comment type="interaction">
    <interactant intactId="EBI-701927">
        <id>O60716</id>
    </interactant>
    <interactant intactId="EBI-727282">
        <id>Q7Z6J6</id>
        <label>FRMD5</label>
    </interactant>
    <organismsDiffer>false</organismsDiffer>
    <experiments>3</experiments>
</comment>
<comment type="interaction">
    <interactant intactId="EBI-701927">
        <id>O60716</id>
    </interactant>
    <interactant intactId="EBI-1039152">
        <id>P08581</id>
        <label>MET</label>
    </interactant>
    <organismsDiffer>false</organismsDiffer>
    <experiments>2</experiments>
</comment>
<comment type="interaction">
    <interactant intactId="EBI-701927">
        <id>O60716</id>
    </interactant>
    <interactant intactId="EBI-766232">
        <id>O14495</id>
        <label>PLPP3</label>
    </interactant>
    <organismsDiffer>false</organismsDiffer>
    <experiments>9</experiments>
</comment>
<comment type="interaction">
    <interactant intactId="EBI-701927">
        <id>O60716</id>
    </interactant>
    <interactant intactId="EBI-2264500">
        <id>Q12913</id>
        <label>PTPRJ</label>
    </interactant>
    <organismsDiffer>false</organismsDiffer>
    <experiments>5</experiments>
</comment>
<comment type="interaction">
    <interactant intactId="EBI-701927">
        <id>O60716</id>
    </interactant>
    <interactant intactId="EBI-2682386">
        <id>Q96PV0</id>
        <label>SYNGAP1</label>
    </interactant>
    <organismsDiffer>false</organismsDiffer>
    <experiments>4</experiments>
</comment>
<comment type="interaction">
    <interactant intactId="EBI-701927">
        <id>O60716</id>
    </interactant>
    <interactant intactId="EBI-2515625">
        <id>Q86T24</id>
        <label>ZBTB33</label>
    </interactant>
    <organismsDiffer>false</organismsDiffer>
    <experiments>2</experiments>
</comment>
<comment type="interaction">
    <interactant intactId="EBI-701927">
        <id>O60716</id>
    </interactant>
    <interactant intactId="EBI-55025805">
        <id>A0A0S2C3P2</id>
        <label>cagA</label>
    </interactant>
    <organismsDiffer>true</organismsDiffer>
    <experiments>3</experiments>
</comment>
<comment type="interaction">
    <interactant intactId="EBI-701963">
        <id>O60716-5</id>
    </interactant>
    <interactant intactId="EBI-2511344">
        <id>Q8NC69</id>
        <label>KCTD6</label>
    </interactant>
    <organismsDiffer>false</organismsDiffer>
    <experiments>3</experiments>
</comment>
<comment type="interaction">
    <interactant intactId="EBI-701963">
        <id>O60716-5</id>
    </interactant>
    <interactant intactId="EBI-2515625">
        <id>Q86T24</id>
        <label>ZBTB33</label>
    </interactant>
    <organismsDiffer>false</organismsDiffer>
    <experiments>3</experiments>
</comment>
<comment type="interaction">
    <interactant intactId="EBI-9634525">
        <id>O60716-21</id>
    </interactant>
    <interactant intactId="EBI-9630165">
        <id>Q8WY41</id>
        <label>NANOS1</label>
    </interactant>
    <organismsDiffer>false</organismsDiffer>
    <experiments>2</experiments>
</comment>
<comment type="interaction">
    <interactant intactId="EBI-702059">
        <id>O60716-29</id>
    </interactant>
    <interactant intactId="EBI-2511344">
        <id>Q8NC69</id>
        <label>KCTD6</label>
    </interactant>
    <organismsDiffer>false</organismsDiffer>
    <experiments>3</experiments>
</comment>
<comment type="interaction">
    <interactant intactId="EBI-702059">
        <id>O60716-29</id>
    </interactant>
    <interactant intactId="EBI-984420">
        <id>P09803</id>
        <label>Cdh1</label>
    </interactant>
    <organismsDiffer>true</organismsDiffer>
    <experiments>3</experiments>
</comment>
<comment type="subcellular location">
    <subcellularLocation>
        <location evidence="5">Cell junction</location>
        <location evidence="5">Adherens junction</location>
    </subcellularLocation>
    <subcellularLocation>
        <location evidence="9 10">Cytoplasm</location>
    </subcellularLocation>
    <subcellularLocation>
        <location evidence="5 11">Nucleus</location>
    </subcellularLocation>
    <subcellularLocation>
        <location evidence="9 10">Cell membrane</location>
    </subcellularLocation>
    <subcellularLocation>
        <location evidence="14">Cell junction</location>
    </subcellularLocation>
    <text evidence="1 5 9 10">Interaction with GLIS2 promotes nuclear translocation (By similarity). Detected at cell-cell contacts (PubMed:15240885, PubMed:17047063). NANOS1 induces its translocation from sites of cell-cell contact to the cytoplasm (PubMed:17047063). CDH1 enhances cell membrane localization (PubMed:15240885). Localizes to cell-cell contacts as keratinocyte differentiation progresses (By similarity).</text>
</comment>
<comment type="subcellular location">
    <molecule>Isoform 1A</molecule>
    <subcellularLocation>
        <location evidence="5">Nucleus</location>
    </subcellularLocation>
</comment>
<comment type="subcellular location">
    <molecule>Isoform 2A</molecule>
    <subcellularLocation>
        <location evidence="5">Nucleus</location>
    </subcellularLocation>
</comment>
<comment type="subcellular location">
    <molecule>Isoform 3A</molecule>
    <subcellularLocation>
        <location evidence="5">Nucleus</location>
    </subcellularLocation>
</comment>
<comment type="subcellular location">
    <molecule>Isoform 4A</molecule>
    <subcellularLocation>
        <location evidence="5">Cytoplasm</location>
    </subcellularLocation>
</comment>
<comment type="subcellular location">
    <molecule>Isoform 1AB</molecule>
    <subcellularLocation>
        <location evidence="5">Cytoplasm</location>
    </subcellularLocation>
</comment>
<comment type="alternative products">
    <event type="alternative splicing"/>
    <event type="alternative initiation"/>
    <isoform>
        <id>O60716-1</id>
        <name>1ABC</name>
        <sequence type="displayed"/>
    </isoform>
    <isoform>
        <id>O60716-2</id>
        <name>1AB</name>
        <name evidence="26">p120-1AB</name>
        <sequence type="described" ref="VSP_006743"/>
    </isoform>
    <isoform>
        <id>O60716-3</id>
        <name>1AC</name>
        <sequence type="described" ref="VSP_006745"/>
    </isoform>
    <isoform>
        <id>O60716-4</id>
        <name>1BC</name>
        <name evidence="26">p120-1A</name>
        <sequence type="described" ref="VSP_006744"/>
    </isoform>
    <isoform>
        <id>O60716-5</id>
        <name>1A</name>
        <sequence type="described" ref="VSP_006743 VSP_006745"/>
    </isoform>
    <isoform>
        <id>O60716-6</id>
        <name>1B</name>
        <sequence type="described" ref="VSP_006743 VSP_006744"/>
    </isoform>
    <isoform>
        <id>O60716-7</id>
        <name>1C</name>
        <sequence type="described" ref="VSP_006744 VSP_006745"/>
    </isoform>
    <isoform>
        <id>O60716-8</id>
        <name>1</name>
        <sequence type="described" ref="VSP_006743 VSP_006744 VSP_006745"/>
    </isoform>
    <isoform>
        <id>O60716-9</id>
        <name>2ABC</name>
        <sequence type="described" ref="VSP_006740"/>
    </isoform>
    <isoform>
        <id>O60716-10</id>
        <name>2AB</name>
        <sequence type="described" ref="VSP_006740 VSP_006743"/>
    </isoform>
    <isoform>
        <id>O60716-11</id>
        <name>2AC</name>
        <sequence type="described" ref="VSP_006740 VSP_006745"/>
    </isoform>
    <isoform>
        <id>O60716-12</id>
        <name>2BC</name>
        <sequence type="described" ref="VSP_006740 VSP_006744"/>
    </isoform>
    <isoform>
        <id>O60716-13</id>
        <name>2A</name>
        <sequence type="described" ref="VSP_006740 VSP_006743 VSP_006745"/>
    </isoform>
    <isoform>
        <id>O60716-14</id>
        <name>2B</name>
        <sequence type="described" ref="VSP_006740 VSP_006743 VSP_006744"/>
    </isoform>
    <isoform>
        <id>O60716-15</id>
        <name>2C</name>
        <sequence type="described" ref="VSP_006740 VSP_006744 VSP_006745"/>
    </isoform>
    <isoform>
        <id>O60716-16</id>
        <name>2</name>
        <sequence type="described" ref="VSP_006740 VSP_006743 VSP_006744 VSP_006745"/>
    </isoform>
    <isoform>
        <id>O60716-17</id>
        <name>3ABC</name>
        <sequence type="described" ref="VSP_006741"/>
    </isoform>
    <isoform>
        <id>O60716-18</id>
        <name>3AB</name>
        <sequence type="described" ref="VSP_006741 VSP_006743"/>
    </isoform>
    <isoform>
        <id>O60716-19</id>
        <name>3AC</name>
        <sequence type="described" ref="VSP_006741 VSP_006745"/>
    </isoform>
    <isoform>
        <id>O60716-20</id>
        <name>3BC</name>
        <sequence type="described" ref="VSP_006741 VSP_006744"/>
    </isoform>
    <isoform>
        <id>O60716-21</id>
        <name>3A</name>
        <sequence type="described" ref="VSP_006741 VSP_006743 VSP_006745"/>
    </isoform>
    <isoform>
        <id>O60716-22</id>
        <name>3B</name>
        <sequence type="described" ref="VSP_006741 VSP_006743 VSP_006744"/>
    </isoform>
    <isoform>
        <id>O60716-23</id>
        <name>3C</name>
        <sequence type="described" ref="VSP_006741 VSP_006744 VSP_006745"/>
    </isoform>
    <isoform>
        <id>O60716-24</id>
        <name>3</name>
        <sequence type="described" ref="VSP_006741 VSP_006743 VSP_006744 VSP_006745"/>
    </isoform>
    <isoform>
        <id>O60716-25</id>
        <name>4ABC</name>
        <sequence type="described" ref="VSP_006742"/>
    </isoform>
    <isoform>
        <id>O60716-26</id>
        <name>4AB</name>
        <sequence type="described" ref="VSP_006742 VSP_006743"/>
    </isoform>
    <isoform>
        <id>O60716-27</id>
        <name>4AC</name>
        <sequence type="described" ref="VSP_006742 VSP_006745"/>
    </isoform>
    <isoform>
        <id>O60716-28</id>
        <name>4BC</name>
        <sequence type="described" ref="VSP_006742 VSP_006744"/>
    </isoform>
    <isoform>
        <id>O60716-29</id>
        <name>4A</name>
        <sequence type="described" ref="VSP_006742 VSP_006743 VSP_006745"/>
    </isoform>
    <isoform>
        <id>O60716-30</id>
        <name>4B</name>
        <sequence type="described" ref="VSP_006742 VSP_006743 VSP_006744"/>
    </isoform>
    <isoform>
        <id>O60716-31</id>
        <name>4C</name>
        <sequence type="described" ref="VSP_006742 VSP_006744 VSP_006745"/>
    </isoform>
    <isoform>
        <id>O60716-32</id>
        <name>4</name>
        <sequence type="described" ref="VSP_006742 VSP_006743 VSP_006744 VSP_006745"/>
    </isoform>
    <text>Isoforms result of a combination of four transcription start sites and three alternatively spliced exons(A, B and C).</text>
</comment>
<comment type="tissue specificity">
    <text evidence="5 8">Expressed in vascular endothelium. Melanocytes and melanoma cells primarily express the long isoform 1A, whereas keratinocytes express shorter isoforms, especially 3A. The shortest isoform 4A, is detected in normal keratinocytes and melanocytes, and generally lost from cells derived from squamous cell carcinomas or melanomas. The C-terminal alternatively spliced exon B is present in the p120ctn transcripts in the colon, intestine and prostate, but lost in several tumor tissues derived from these organs.</text>
</comment>
<comment type="induction">
    <text evidence="8">Induced in vascular endothelium by wounding. This effect is potentiated by prior laminar shear stress, which enhances wound closure.</text>
</comment>
<comment type="domain">
    <text>A possible nuclear localization signal exists in all isoforms where Asp-626--631-Arg are deleted.</text>
</comment>
<comment type="domain">
    <text>ARM repeats 1 to 5 mediate interaction with cadherins.</text>
</comment>
<comment type="PTM">
    <text evidence="6 12 18 22">Phosphorylated by FER and other protein-tyrosine kinases. Phosphorylated at Ser-288 by PAK5. Dephosphorylated by PTPRJ.</text>
</comment>
<comment type="disease" evidence="21">
    <disease id="DI-05104">
        <name>Blepharocheilodontic syndrome 2</name>
        <acronym>BCDS2</acronym>
        <description>A form of blepharocheilodontic syndrome, a rare autosomal dominant disorder. It is characterized by lower eyelid ectropion, upper eyelid distichiasis, euryblepharon, bilateral cleft lip and palate, and features of ectodermal dysplasia, including hair anomalies, conical teeth and tooth agenesis. An additional rare manifestation is imperforate anus. There is considerable phenotypic variability among affected individuals.</description>
        <dbReference type="MIM" id="617681"/>
    </disease>
    <text>The disease is caused by variants affecting the gene represented in this entry.</text>
</comment>
<comment type="similarity">
    <text evidence="28">Belongs to the beta-catenin family.</text>
</comment>
<comment type="sequence caution" evidence="28">
    <conflict type="erroneous initiation">
        <sequence resource="EMBL-CDS" id="BAA20838"/>
    </conflict>
    <text>Extended N-terminus.</text>
</comment>
<comment type="online information" name="Atlas of Genetics and Cytogenetics in Oncology and Haematology">
    <link uri="https://atlasgeneticsoncology.org/gene/40197/CTNND1"/>
</comment>
<keyword id="KW-0002">3D-structure</keyword>
<keyword id="KW-0007">Acetylation</keyword>
<keyword id="KW-0024">Alternative initiation</keyword>
<keyword id="KW-0025">Alternative splicing</keyword>
<keyword id="KW-0130">Cell adhesion</keyword>
<keyword id="KW-0965">Cell junction</keyword>
<keyword id="KW-1003">Cell membrane</keyword>
<keyword id="KW-0175">Coiled coil</keyword>
<keyword id="KW-0963">Cytoplasm</keyword>
<keyword id="KW-0225">Disease variant</keyword>
<keyword id="KW-0038">Ectodermal dysplasia</keyword>
<keyword id="KW-1017">Isopeptide bond</keyword>
<keyword id="KW-0472">Membrane</keyword>
<keyword id="KW-0539">Nucleus</keyword>
<keyword id="KW-0597">Phosphoprotein</keyword>
<keyword id="KW-1267">Proteomics identification</keyword>
<keyword id="KW-1185">Reference proteome</keyword>
<keyword id="KW-0677">Repeat</keyword>
<keyword id="KW-0804">Transcription</keyword>
<keyword id="KW-0805">Transcription regulation</keyword>
<keyword id="KW-0832">Ubl conjugation</keyword>
<keyword id="KW-0879">Wnt signaling pathway</keyword>
<gene>
    <name evidence="29" type="primary">CTNND1</name>
    <name type="synonym">KIAA0384</name>
</gene>
<dbReference type="EMBL" id="AF062319">
    <property type="protein sequence ID" value="AAC39804.1"/>
    <property type="molecule type" value="mRNA"/>
</dbReference>
<dbReference type="EMBL" id="AF062323">
    <property type="protein sequence ID" value="AAC39808.1"/>
    <property type="molecule type" value="mRNA"/>
</dbReference>
<dbReference type="EMBL" id="AF062341">
    <property type="protein sequence ID" value="AAC39826.1"/>
    <property type="molecule type" value="mRNA"/>
</dbReference>
<dbReference type="EMBL" id="AF062342">
    <property type="protein sequence ID" value="AAC39827.1"/>
    <property type="molecule type" value="mRNA"/>
</dbReference>
<dbReference type="EMBL" id="AF062322">
    <property type="protein sequence ID" value="AAC39807.1"/>
    <property type="molecule type" value="mRNA"/>
</dbReference>
<dbReference type="EMBL" id="AF062326">
    <property type="protein sequence ID" value="AAC39811.1"/>
    <property type="molecule type" value="mRNA"/>
</dbReference>
<dbReference type="EMBL" id="AF062328">
    <property type="protein sequence ID" value="AAC39813.1"/>
    <property type="molecule type" value="mRNA"/>
</dbReference>
<dbReference type="EMBL" id="AF062338">
    <property type="protein sequence ID" value="AAC39823.1"/>
    <property type="molecule type" value="mRNA"/>
</dbReference>
<dbReference type="EMBL" id="AF062324">
    <property type="protein sequence ID" value="AAC39809.1"/>
    <property type="molecule type" value="mRNA"/>
</dbReference>
<dbReference type="EMBL" id="AF062327">
    <property type="protein sequence ID" value="AAC39812.1"/>
    <property type="molecule type" value="mRNA"/>
</dbReference>
<dbReference type="EMBL" id="AF062329">
    <property type="protein sequence ID" value="AAC39814.1"/>
    <property type="molecule type" value="mRNA"/>
</dbReference>
<dbReference type="EMBL" id="AF062330">
    <property type="protein sequence ID" value="AAC39815.1"/>
    <property type="molecule type" value="mRNA"/>
</dbReference>
<dbReference type="EMBL" id="AF062331">
    <property type="protein sequence ID" value="AAC39816.1"/>
    <property type="molecule type" value="mRNA"/>
</dbReference>
<dbReference type="EMBL" id="AF062333">
    <property type="protein sequence ID" value="AAC39818.1"/>
    <property type="molecule type" value="mRNA"/>
</dbReference>
<dbReference type="EMBL" id="AF062334">
    <property type="protein sequence ID" value="AAC39819.1"/>
    <property type="molecule type" value="mRNA"/>
</dbReference>
<dbReference type="EMBL" id="AF062335">
    <property type="protein sequence ID" value="AAC39820.1"/>
    <property type="molecule type" value="mRNA"/>
</dbReference>
<dbReference type="EMBL" id="AF062336">
    <property type="protein sequence ID" value="AAC39821.1"/>
    <property type="molecule type" value="mRNA"/>
</dbReference>
<dbReference type="EMBL" id="AF062339">
    <property type="protein sequence ID" value="AAC39824.1"/>
    <property type="molecule type" value="mRNA"/>
</dbReference>
<dbReference type="EMBL" id="AF062340">
    <property type="protein sequence ID" value="AAC39825.1"/>
    <property type="molecule type" value="mRNA"/>
</dbReference>
<dbReference type="EMBL" id="AF062343">
    <property type="protein sequence ID" value="AAC39828.1"/>
    <property type="molecule type" value="mRNA"/>
</dbReference>
<dbReference type="EMBL" id="AF062317">
    <property type="protein sequence ID" value="AAC39802.1"/>
    <property type="molecule type" value="mRNA"/>
</dbReference>
<dbReference type="EMBL" id="AF062325">
    <property type="protein sequence ID" value="AAC39810.1"/>
    <property type="molecule type" value="mRNA"/>
</dbReference>
<dbReference type="EMBL" id="AF062332">
    <property type="protein sequence ID" value="AAC39817.1"/>
    <property type="molecule type" value="mRNA"/>
</dbReference>
<dbReference type="EMBL" id="AF062344">
    <property type="protein sequence ID" value="AAC39829.1"/>
    <property type="molecule type" value="mRNA"/>
</dbReference>
<dbReference type="EMBL" id="AF062321">
    <property type="protein sequence ID" value="AAC39806.1"/>
    <property type="molecule type" value="mRNA"/>
</dbReference>
<dbReference type="EMBL" id="AF062320">
    <property type="protein sequence ID" value="AAC39805.1"/>
    <property type="molecule type" value="mRNA"/>
</dbReference>
<dbReference type="EMBL" id="AF062337">
    <property type="protein sequence ID" value="AAC39822.1"/>
    <property type="molecule type" value="mRNA"/>
</dbReference>
<dbReference type="EMBL" id="AF062318">
    <property type="protein sequence ID" value="AAC39803.1"/>
    <property type="molecule type" value="mRNA"/>
</dbReference>
<dbReference type="EMBL" id="AB002382">
    <property type="protein sequence ID" value="BAA20838.2"/>
    <property type="status" value="ALT_INIT"/>
    <property type="molecule type" value="mRNA"/>
</dbReference>
<dbReference type="EMBL" id="AK292554">
    <property type="protein sequence ID" value="BAF85243.1"/>
    <property type="molecule type" value="mRNA"/>
</dbReference>
<dbReference type="EMBL" id="AY505564">
    <property type="protein sequence ID" value="AAR84236.1"/>
    <property type="molecule type" value="Genomic_DNA"/>
</dbReference>
<dbReference type="EMBL" id="AP001931">
    <property type="status" value="NOT_ANNOTATED_CDS"/>
    <property type="molecule type" value="Genomic_DNA"/>
</dbReference>
<dbReference type="EMBL" id="BC075795">
    <property type="protein sequence ID" value="AAH75795.1"/>
    <property type="molecule type" value="mRNA"/>
</dbReference>
<dbReference type="CCDS" id="CCDS44604.1">
    <molecule id="O60716-1"/>
</dbReference>
<dbReference type="CCDS" id="CCDS44605.1">
    <molecule id="O60716-2"/>
</dbReference>
<dbReference type="CCDS" id="CCDS44606.1">
    <molecule id="O60716-5"/>
</dbReference>
<dbReference type="CCDS" id="CCDS44607.1">
    <molecule id="O60716-6"/>
</dbReference>
<dbReference type="CCDS" id="CCDS44608.1">
    <molecule id="O60716-17"/>
</dbReference>
<dbReference type="CCDS" id="CCDS44609.1">
    <molecule id="O60716-21"/>
</dbReference>
<dbReference type="CCDS" id="CCDS53632.1">
    <molecule id="O60716-19"/>
</dbReference>
<dbReference type="CCDS" id="CCDS53633.1">
    <molecule id="O60716-18"/>
</dbReference>
<dbReference type="CCDS" id="CCDS53634.1">
    <molecule id="O60716-22"/>
</dbReference>
<dbReference type="CCDS" id="CCDS55763.1">
    <molecule id="O60716-9"/>
</dbReference>
<dbReference type="CCDS" id="CCDS55764.1">
    <molecule id="O60716-11"/>
</dbReference>
<dbReference type="CCDS" id="CCDS55765.1">
    <molecule id="O60716-10"/>
</dbReference>
<dbReference type="CCDS" id="CCDS55766.1">
    <molecule id="O60716-13"/>
</dbReference>
<dbReference type="CCDS" id="CCDS55767.1">
    <molecule id="O60716-14"/>
</dbReference>
<dbReference type="CCDS" id="CCDS73290.1">
    <molecule id="O60716-3"/>
</dbReference>
<dbReference type="RefSeq" id="NP_001078927.1">
    <molecule id="O60716-1"/>
    <property type="nucleotide sequence ID" value="NM_001085458.2"/>
</dbReference>
<dbReference type="RefSeq" id="NP_001078928.1">
    <molecule id="O60716-2"/>
    <property type="nucleotide sequence ID" value="NM_001085459.2"/>
</dbReference>
<dbReference type="RefSeq" id="NP_001078929.1">
    <molecule id="O60716-5"/>
    <property type="nucleotide sequence ID" value="NM_001085460.2"/>
</dbReference>
<dbReference type="RefSeq" id="NP_001078930.1">
    <molecule id="O60716-5"/>
    <property type="nucleotide sequence ID" value="NM_001085461.2"/>
</dbReference>
<dbReference type="RefSeq" id="NP_001078931.1">
    <molecule id="O60716-5"/>
    <property type="nucleotide sequence ID" value="NM_001085462.2"/>
</dbReference>
<dbReference type="RefSeq" id="NP_001078932.1">
    <molecule id="O60716-17"/>
    <property type="nucleotide sequence ID" value="NM_001085463.2"/>
</dbReference>
<dbReference type="RefSeq" id="NP_001078933.1">
    <molecule id="O60716-18"/>
    <property type="nucleotide sequence ID" value="NM_001085464.2"/>
</dbReference>
<dbReference type="RefSeq" id="NP_001078934.1">
    <molecule id="O60716-22"/>
    <property type="nucleotide sequence ID" value="NM_001085465.2"/>
</dbReference>
<dbReference type="RefSeq" id="NP_001078935.1">
    <molecule id="O60716-19"/>
    <property type="nucleotide sequence ID" value="NM_001085466.2"/>
</dbReference>
<dbReference type="RefSeq" id="NP_001078936.1">
    <molecule id="O60716-21"/>
    <property type="nucleotide sequence ID" value="NM_001085467.2"/>
</dbReference>
<dbReference type="RefSeq" id="NP_001078937.1">
    <molecule id="O60716-21"/>
    <property type="nucleotide sequence ID" value="NM_001085468.2"/>
</dbReference>
<dbReference type="RefSeq" id="NP_001078938.1">
    <molecule id="O60716-21"/>
    <property type="nucleotide sequence ID" value="NM_001085469.2"/>
</dbReference>
<dbReference type="RefSeq" id="NP_001193812.1">
    <molecule id="O60716-9"/>
    <property type="nucleotide sequence ID" value="NM_001206883.2"/>
</dbReference>
<dbReference type="RefSeq" id="NP_001193813.1">
    <molecule id="O60716-11"/>
    <property type="nucleotide sequence ID" value="NM_001206884.2"/>
</dbReference>
<dbReference type="RefSeq" id="NP_001193814.1">
    <molecule id="O60716-3"/>
    <property type="nucleotide sequence ID" value="NM_001206885.2"/>
</dbReference>
<dbReference type="RefSeq" id="NP_001193815.1">
    <molecule id="O60716-10"/>
    <property type="nucleotide sequence ID" value="NM_001206886.2"/>
</dbReference>
<dbReference type="RefSeq" id="NP_001193816.1">
    <molecule id="O60716-14"/>
    <property type="nucleotide sequence ID" value="NM_001206887.2"/>
</dbReference>
<dbReference type="RefSeq" id="NP_001193817.1">
    <molecule id="O60716-13"/>
    <property type="nucleotide sequence ID" value="NM_001206888.2"/>
</dbReference>
<dbReference type="RefSeq" id="NP_001193818.1">
    <molecule id="O60716-13"/>
    <property type="nucleotide sequence ID" value="NM_001206889.2"/>
</dbReference>
<dbReference type="RefSeq" id="NP_001193819.1">
    <molecule id="O60716-21"/>
    <property type="nucleotide sequence ID" value="NM_001206890.2"/>
</dbReference>
<dbReference type="RefSeq" id="NP_001193820.1">
    <molecule id="O60716-13"/>
    <property type="nucleotide sequence ID" value="NM_001206891.2"/>
</dbReference>
<dbReference type="RefSeq" id="NP_001322.1">
    <molecule id="O60716-6"/>
    <property type="nucleotide sequence ID" value="NM_001331.3"/>
</dbReference>
<dbReference type="PDB" id="3L6X">
    <property type="method" value="X-ray"/>
    <property type="resolution" value="2.40 A"/>
    <property type="chains" value="A=324-937"/>
</dbReference>
<dbReference type="PDB" id="3L6Y">
    <property type="method" value="X-ray"/>
    <property type="resolution" value="3.00 A"/>
    <property type="chains" value="A/C/E=324-937"/>
</dbReference>
<dbReference type="PDBsum" id="3L6X"/>
<dbReference type="PDBsum" id="3L6Y"/>
<dbReference type="SMR" id="O60716"/>
<dbReference type="BioGRID" id="107881">
    <property type="interactions" value="259"/>
</dbReference>
<dbReference type="CORUM" id="O60716"/>
<dbReference type="DIP" id="DIP-33850N"/>
<dbReference type="ELM" id="O60716"/>
<dbReference type="FunCoup" id="O60716">
    <property type="interactions" value="2149"/>
</dbReference>
<dbReference type="IntAct" id="O60716">
    <property type="interactions" value="121"/>
</dbReference>
<dbReference type="MINT" id="O60716"/>
<dbReference type="STRING" id="9606.ENSP00000382004"/>
<dbReference type="TCDB" id="8.A.160.1.1">
    <property type="family name" value="the catenin (catenin) family"/>
</dbReference>
<dbReference type="CarbonylDB" id="O60716"/>
<dbReference type="GlyConnect" id="1078">
    <property type="glycosylation" value="4 N-Linked glycans (1 site)"/>
</dbReference>
<dbReference type="GlyCosmos" id="O60716">
    <property type="glycosylation" value="1 site, 3 glycans"/>
</dbReference>
<dbReference type="GlyGen" id="O60716">
    <property type="glycosylation" value="3 sites, 4 N-linked glycans (2 sites), 1 O-linked glycan (1 site)"/>
</dbReference>
<dbReference type="iPTMnet" id="O60716"/>
<dbReference type="MetOSite" id="O60716"/>
<dbReference type="PhosphoSitePlus" id="O60716"/>
<dbReference type="SwissPalm" id="O60716"/>
<dbReference type="BioMuta" id="CTNND1"/>
<dbReference type="jPOST" id="O60716"/>
<dbReference type="MassIVE" id="O60716"/>
<dbReference type="PaxDb" id="9606-ENSP00000382004"/>
<dbReference type="PeptideAtlas" id="O60716"/>
<dbReference type="ProteomicsDB" id="49537">
    <molecule id="O60716-1"/>
</dbReference>
<dbReference type="ProteomicsDB" id="49538">
    <molecule id="O60716-10"/>
</dbReference>
<dbReference type="ProteomicsDB" id="49539">
    <molecule id="O60716-11"/>
</dbReference>
<dbReference type="ProteomicsDB" id="49540">
    <molecule id="O60716-12"/>
</dbReference>
<dbReference type="ProteomicsDB" id="49541">
    <molecule id="O60716-13"/>
</dbReference>
<dbReference type="ProteomicsDB" id="49542">
    <molecule id="O60716-14"/>
</dbReference>
<dbReference type="ProteomicsDB" id="49543">
    <molecule id="O60716-15"/>
</dbReference>
<dbReference type="ProteomicsDB" id="49544">
    <molecule id="O60716-16"/>
</dbReference>
<dbReference type="ProteomicsDB" id="49545">
    <molecule id="O60716-17"/>
</dbReference>
<dbReference type="ProteomicsDB" id="49546">
    <molecule id="O60716-18"/>
</dbReference>
<dbReference type="ProteomicsDB" id="49547">
    <molecule id="O60716-19"/>
</dbReference>
<dbReference type="ProteomicsDB" id="49548">
    <molecule id="O60716-2"/>
</dbReference>
<dbReference type="ProteomicsDB" id="49549">
    <molecule id="O60716-20"/>
</dbReference>
<dbReference type="ProteomicsDB" id="49550">
    <molecule id="O60716-21"/>
</dbReference>
<dbReference type="ProteomicsDB" id="49551">
    <molecule id="O60716-22"/>
</dbReference>
<dbReference type="ProteomicsDB" id="49552">
    <molecule id="O60716-23"/>
</dbReference>
<dbReference type="ProteomicsDB" id="49553">
    <molecule id="O60716-24"/>
</dbReference>
<dbReference type="ProteomicsDB" id="49554">
    <molecule id="O60716-25"/>
</dbReference>
<dbReference type="ProteomicsDB" id="49555">
    <molecule id="O60716-26"/>
</dbReference>
<dbReference type="ProteomicsDB" id="49556">
    <molecule id="O60716-27"/>
</dbReference>
<dbReference type="ProteomicsDB" id="49557">
    <molecule id="O60716-28"/>
</dbReference>
<dbReference type="ProteomicsDB" id="49558">
    <molecule id="O60716-29"/>
</dbReference>
<dbReference type="ProteomicsDB" id="49559">
    <molecule id="O60716-3"/>
</dbReference>
<dbReference type="ProteomicsDB" id="49560">
    <molecule id="O60716-30"/>
</dbReference>
<dbReference type="ProteomicsDB" id="49561">
    <molecule id="O60716-31"/>
</dbReference>
<dbReference type="ProteomicsDB" id="49562">
    <molecule id="O60716-32"/>
</dbReference>
<dbReference type="ProteomicsDB" id="49563">
    <molecule id="O60716-4"/>
</dbReference>
<dbReference type="ProteomicsDB" id="49564">
    <molecule id="O60716-5"/>
</dbReference>
<dbReference type="ProteomicsDB" id="49565">
    <molecule id="O60716-6"/>
</dbReference>
<dbReference type="ProteomicsDB" id="49566">
    <molecule id="O60716-7"/>
</dbReference>
<dbReference type="ProteomicsDB" id="49567">
    <molecule id="O60716-8"/>
</dbReference>
<dbReference type="ProteomicsDB" id="49568">
    <molecule id="O60716-9"/>
</dbReference>
<dbReference type="Pumba" id="O60716"/>
<dbReference type="Antibodypedia" id="2886">
    <property type="antibodies" value="1155 antibodies from 46 providers"/>
</dbReference>
<dbReference type="DNASU" id="1500"/>
<dbReference type="Ensembl" id="ENST00000358694.10">
    <molecule id="O60716-5"/>
    <property type="protein sequence ID" value="ENSP00000351527.6"/>
    <property type="gene ID" value="ENSG00000198561.16"/>
</dbReference>
<dbReference type="Ensembl" id="ENST00000361332.8">
    <molecule id="O60716-2"/>
    <property type="protein sequence ID" value="ENSP00000354823.4"/>
    <property type="gene ID" value="ENSG00000198561.16"/>
</dbReference>
<dbReference type="Ensembl" id="ENST00000361391.10">
    <molecule id="O60716-6"/>
    <property type="protein sequence ID" value="ENSP00000354785.6"/>
    <property type="gene ID" value="ENSG00000198561.16"/>
</dbReference>
<dbReference type="Ensembl" id="ENST00000361796.9">
    <molecule id="O60716-3"/>
    <property type="protein sequence ID" value="ENSP00000354907.5"/>
    <property type="gene ID" value="ENSG00000198561.16"/>
</dbReference>
<dbReference type="Ensembl" id="ENST00000399050.10">
    <molecule id="O60716-1"/>
    <property type="protein sequence ID" value="ENSP00000382004.5"/>
    <property type="gene ID" value="ENSG00000198561.16"/>
</dbReference>
<dbReference type="Ensembl" id="ENST00000415361.6">
    <molecule id="O60716-17"/>
    <property type="protein sequence ID" value="ENSP00000403518.2"/>
    <property type="gene ID" value="ENSG00000198561.16"/>
</dbReference>
<dbReference type="Ensembl" id="ENST00000426142.6">
    <molecule id="O60716-21"/>
    <property type="protein sequence ID" value="ENSP00000409930.2"/>
    <property type="gene ID" value="ENSG00000198561.16"/>
</dbReference>
<dbReference type="Ensembl" id="ENST00000428599.6">
    <molecule id="O60716-5"/>
    <property type="protein sequence ID" value="ENSP00000413586.2"/>
    <property type="gene ID" value="ENSG00000198561.16"/>
</dbReference>
<dbReference type="Ensembl" id="ENST00000524630.5">
    <molecule id="O60716-5"/>
    <property type="protein sequence ID" value="ENSP00000436543.1"/>
    <property type="gene ID" value="ENSG00000198561.16"/>
</dbReference>
<dbReference type="Ensembl" id="ENST00000525902.5">
    <molecule id="O60716-27"/>
    <property type="protein sequence ID" value="ENSP00000434672.1"/>
    <property type="gene ID" value="ENSG00000198561.16"/>
</dbReference>
<dbReference type="Ensembl" id="ENST00000526357.5">
    <molecule id="O60716-10"/>
    <property type="protein sequence ID" value="ENSP00000433334.1"/>
    <property type="gene ID" value="ENSG00000198561.16"/>
</dbReference>
<dbReference type="Ensembl" id="ENST00000526772.5">
    <molecule id="O60716-29"/>
    <property type="protein sequence ID" value="ENSP00000433158.1"/>
    <property type="gene ID" value="ENSG00000198561.16"/>
</dbReference>
<dbReference type="Ensembl" id="ENST00000526938.5">
    <molecule id="O60716-7"/>
    <property type="protein sequence ID" value="ENSP00000432041.1"/>
    <property type="gene ID" value="ENSG00000198561.16"/>
</dbReference>
<dbReference type="Ensembl" id="ENST00000527467.5">
    <molecule id="O60716-25"/>
    <property type="protein sequence ID" value="ENSP00000434900.1"/>
    <property type="gene ID" value="ENSG00000198561.16"/>
</dbReference>
<dbReference type="Ensembl" id="ENST00000528232.5">
    <molecule id="O60716-19"/>
    <property type="protein sequence ID" value="ENSP00000435266.1"/>
    <property type="gene ID" value="ENSG00000198561.16"/>
</dbReference>
<dbReference type="Ensembl" id="ENST00000528621.5">
    <molecule id="O60716-13"/>
    <property type="protein sequence ID" value="ENSP00000432243.1"/>
    <property type="gene ID" value="ENSG00000198561.16"/>
</dbReference>
<dbReference type="Ensembl" id="ENST00000529526.5">
    <molecule id="O60716-13"/>
    <property type="protein sequence ID" value="ENSP00000436323.1"/>
    <property type="gene ID" value="ENSG00000198561.16"/>
</dbReference>
<dbReference type="Ensembl" id="ENST00000529873.5">
    <molecule id="O60716-14"/>
    <property type="protein sequence ID" value="ENSP00000435494.1"/>
    <property type="gene ID" value="ENSG00000198561.16"/>
</dbReference>
<dbReference type="Ensembl" id="ENST00000529986.5">
    <molecule id="O60716-21"/>
    <property type="protein sequence ID" value="ENSP00000437156.1"/>
    <property type="gene ID" value="ENSG00000198561.16"/>
</dbReference>
<dbReference type="Ensembl" id="ENST00000530094.5">
    <molecule id="O60716-18"/>
    <property type="protein sequence ID" value="ENSP00000437327.1"/>
    <property type="gene ID" value="ENSG00000198561.16"/>
</dbReference>
<dbReference type="Ensembl" id="ENST00000530748.5">
    <molecule id="O60716-11"/>
    <property type="protein sequence ID" value="ENSP00000436744.1"/>
    <property type="gene ID" value="ENSG00000198561.16"/>
</dbReference>
<dbReference type="Ensembl" id="ENST00000531014.5">
    <molecule id="O60716-26"/>
    <property type="protein sequence ID" value="ENSP00000432623.1"/>
    <property type="gene ID" value="ENSG00000198561.16"/>
</dbReference>
<dbReference type="Ensembl" id="ENST00000532245.5">
    <molecule id="O60716-21"/>
    <property type="protein sequence ID" value="ENSP00000434017.1"/>
    <property type="gene ID" value="ENSG00000198561.16"/>
</dbReference>
<dbReference type="Ensembl" id="ENST00000532463.5">
    <molecule id="O60716-21"/>
    <property type="protein sequence ID" value="ENSP00000432075.1"/>
    <property type="gene ID" value="ENSG00000198561.16"/>
</dbReference>
<dbReference type="Ensembl" id="ENST00000532649.5">
    <molecule id="O60716-13"/>
    <property type="protein sequence ID" value="ENSP00000435379.1"/>
    <property type="gene ID" value="ENSG00000198561.16"/>
</dbReference>
<dbReference type="Ensembl" id="ENST00000532787.5">
    <molecule id="O60716-22"/>
    <property type="protein sequence ID" value="ENSP00000434949.1"/>
    <property type="gene ID" value="ENSG00000198561.16"/>
</dbReference>
<dbReference type="Ensembl" id="ENST00000532844.5">
    <molecule id="O60716-9"/>
    <property type="protein sequence ID" value="ENSP00000433276.1"/>
    <property type="gene ID" value="ENSG00000198561.16"/>
</dbReference>
<dbReference type="Ensembl" id="ENST00000533667.5">
    <molecule id="O60716-30"/>
    <property type="protein sequence ID" value="ENSP00000437051.1"/>
    <property type="gene ID" value="ENSG00000198561.16"/>
</dbReference>
<dbReference type="Ensembl" id="ENST00000534579.5">
    <molecule id="O60716-13"/>
    <property type="protein sequence ID" value="ENSP00000435789.1"/>
    <property type="gene ID" value="ENSG00000198561.16"/>
</dbReference>
<dbReference type="Ensembl" id="ENST00000673683.1">
    <molecule id="O60716-5"/>
    <property type="protein sequence ID" value="ENSP00000500962.1"/>
    <property type="gene ID" value="ENSG00000198561.16"/>
</dbReference>
<dbReference type="GeneID" id="1500"/>
<dbReference type="KEGG" id="hsa:1500"/>
<dbReference type="MANE-Select" id="ENST00000399050.10">
    <property type="protein sequence ID" value="ENSP00000382004.5"/>
    <property type="RefSeq nucleotide sequence ID" value="NM_001085458.2"/>
    <property type="RefSeq protein sequence ID" value="NP_001078927.1"/>
</dbReference>
<dbReference type="UCSC" id="uc001nli.5">
    <molecule id="O60716-1"/>
    <property type="organism name" value="human"/>
</dbReference>
<dbReference type="AGR" id="HGNC:2515"/>
<dbReference type="CTD" id="1500"/>
<dbReference type="DisGeNET" id="1500"/>
<dbReference type="GeneCards" id="CTNND1"/>
<dbReference type="HGNC" id="HGNC:2515">
    <property type="gene designation" value="CTNND1"/>
</dbReference>
<dbReference type="HPA" id="ENSG00000198561">
    <property type="expression patterns" value="Low tissue specificity"/>
</dbReference>
<dbReference type="MalaCards" id="CTNND1"/>
<dbReference type="MIM" id="601045">
    <property type="type" value="gene"/>
</dbReference>
<dbReference type="MIM" id="617681">
    <property type="type" value="phenotype"/>
</dbReference>
<dbReference type="neXtProt" id="NX_O60716"/>
<dbReference type="OpenTargets" id="ENSG00000198561"/>
<dbReference type="Orphanet" id="1997">
    <property type="disease" value="Blepharo-cheilo-odontic syndrome"/>
</dbReference>
<dbReference type="PharmGKB" id="PA27016"/>
<dbReference type="VEuPathDB" id="HostDB:ENSG00000198561"/>
<dbReference type="eggNOG" id="KOG1048">
    <property type="taxonomic scope" value="Eukaryota"/>
</dbReference>
<dbReference type="GeneTree" id="ENSGT00940000156045"/>
<dbReference type="HOGENOM" id="CLU_009111_4_1_1"/>
<dbReference type="InParanoid" id="O60716"/>
<dbReference type="OMA" id="MVCITQG"/>
<dbReference type="OrthoDB" id="3245100at2759"/>
<dbReference type="PAN-GO" id="O60716">
    <property type="GO annotations" value="7 GO annotations based on evolutionary models"/>
</dbReference>
<dbReference type="PhylomeDB" id="O60716"/>
<dbReference type="TreeFam" id="TF321877"/>
<dbReference type="PathwayCommons" id="O60716"/>
<dbReference type="Reactome" id="R-HSA-418990">
    <property type="pathway name" value="Adherens junctions interactions"/>
</dbReference>
<dbReference type="Reactome" id="R-HSA-5218920">
    <property type="pathway name" value="VEGFR2 mediated vascular permeability"/>
</dbReference>
<dbReference type="Reactome" id="R-HSA-8876493">
    <property type="pathway name" value="InlA-mediated entry of Listeria monocytogenes into host cells"/>
</dbReference>
<dbReference type="Reactome" id="R-HSA-9762292">
    <property type="pathway name" value="Regulation of CDH11 function"/>
</dbReference>
<dbReference type="Reactome" id="R-HSA-9764302">
    <property type="pathway name" value="Regulation of CDH19 Expression and Function"/>
</dbReference>
<dbReference type="Reactome" id="R-HSA-9833576">
    <property type="pathway name" value="CDH11 homotypic and heterotypic interactions"/>
</dbReference>
<dbReference type="SignaLink" id="O60716"/>
<dbReference type="SIGNOR" id="O60716"/>
<dbReference type="BioGRID-ORCS" id="1500">
    <property type="hits" value="32 hits in 1170 CRISPR screens"/>
</dbReference>
<dbReference type="CD-CODE" id="8C2F96ED">
    <property type="entry name" value="Centrosome"/>
</dbReference>
<dbReference type="CD-CODE" id="DEE660B4">
    <property type="entry name" value="Stress granule"/>
</dbReference>
<dbReference type="CD-CODE" id="FB4E32DD">
    <property type="entry name" value="Presynaptic clusters and postsynaptic densities"/>
</dbReference>
<dbReference type="ChiTaRS" id="CTNND1">
    <property type="organism name" value="human"/>
</dbReference>
<dbReference type="EvolutionaryTrace" id="O60716"/>
<dbReference type="GeneWiki" id="CTNND1"/>
<dbReference type="GenomeRNAi" id="1500"/>
<dbReference type="Pharos" id="O60716">
    <property type="development level" value="Tbio"/>
</dbReference>
<dbReference type="PRO" id="PR:O60716"/>
<dbReference type="Proteomes" id="UP000005640">
    <property type="component" value="Chromosome 11"/>
</dbReference>
<dbReference type="RNAct" id="O60716">
    <property type="molecule type" value="protein"/>
</dbReference>
<dbReference type="Bgee" id="ENSG00000198561">
    <property type="expression patterns" value="Expressed in ventricular zone and 102 other cell types or tissues"/>
</dbReference>
<dbReference type="ExpressionAtlas" id="O60716">
    <property type="expression patterns" value="baseline and differential"/>
</dbReference>
<dbReference type="GO" id="GO:0005912">
    <property type="term" value="C:adherens junction"/>
    <property type="evidence" value="ECO:0000314"/>
    <property type="project" value="BHF-UCL"/>
</dbReference>
<dbReference type="GO" id="GO:0016342">
    <property type="term" value="C:catenin complex"/>
    <property type="evidence" value="ECO:0000314"/>
    <property type="project" value="UniProtKB"/>
</dbReference>
<dbReference type="GO" id="GO:0005911">
    <property type="term" value="C:cell-cell junction"/>
    <property type="evidence" value="ECO:0000314"/>
    <property type="project" value="UniProtKB"/>
</dbReference>
<dbReference type="GO" id="GO:0036064">
    <property type="term" value="C:ciliary basal body"/>
    <property type="evidence" value="ECO:0000314"/>
    <property type="project" value="HPA"/>
</dbReference>
<dbReference type="GO" id="GO:0005737">
    <property type="term" value="C:cytoplasm"/>
    <property type="evidence" value="ECO:0000314"/>
    <property type="project" value="UniProtKB"/>
</dbReference>
<dbReference type="GO" id="GO:0005829">
    <property type="term" value="C:cytosol"/>
    <property type="evidence" value="ECO:0000315"/>
    <property type="project" value="BHF-UCL"/>
</dbReference>
<dbReference type="GO" id="GO:0070062">
    <property type="term" value="C:extracellular exosome"/>
    <property type="evidence" value="ECO:0007005"/>
    <property type="project" value="UniProtKB"/>
</dbReference>
<dbReference type="GO" id="GO:0030496">
    <property type="term" value="C:midbody"/>
    <property type="evidence" value="ECO:0000314"/>
    <property type="project" value="UniProtKB"/>
</dbReference>
<dbReference type="GO" id="GO:0005634">
    <property type="term" value="C:nucleus"/>
    <property type="evidence" value="ECO:0000314"/>
    <property type="project" value="BHF-UCL"/>
</dbReference>
<dbReference type="GO" id="GO:0005886">
    <property type="term" value="C:plasma membrane"/>
    <property type="evidence" value="ECO:0000314"/>
    <property type="project" value="HPA"/>
</dbReference>
<dbReference type="GO" id="GO:0045296">
    <property type="term" value="F:cadherin binding"/>
    <property type="evidence" value="ECO:0000353"/>
    <property type="project" value="UniProtKB"/>
</dbReference>
<dbReference type="GO" id="GO:0098632">
    <property type="term" value="F:cell-cell adhesion mediator activity"/>
    <property type="evidence" value="ECO:0000250"/>
    <property type="project" value="UniProt"/>
</dbReference>
<dbReference type="GO" id="GO:0019902">
    <property type="term" value="F:phosphatase binding"/>
    <property type="evidence" value="ECO:0000353"/>
    <property type="project" value="BHF-UCL"/>
</dbReference>
<dbReference type="GO" id="GO:0019212">
    <property type="term" value="F:phosphatase inhibitor activity"/>
    <property type="evidence" value="ECO:0000314"/>
    <property type="project" value="BHF-UCL"/>
</dbReference>
<dbReference type="GO" id="GO:0140311">
    <property type="term" value="F:protein sequestering activity"/>
    <property type="evidence" value="ECO:0000314"/>
    <property type="project" value="UniProt"/>
</dbReference>
<dbReference type="GO" id="GO:0005102">
    <property type="term" value="F:signaling receptor binding"/>
    <property type="evidence" value="ECO:0000353"/>
    <property type="project" value="UniProtKB"/>
</dbReference>
<dbReference type="GO" id="GO:0002042">
    <property type="term" value="P:cell migration involved in sprouting angiogenesis"/>
    <property type="evidence" value="ECO:0000250"/>
    <property type="project" value="UniProt"/>
</dbReference>
<dbReference type="GO" id="GO:0098609">
    <property type="term" value="P:cell-cell adhesion"/>
    <property type="evidence" value="ECO:0000318"/>
    <property type="project" value="GO_Central"/>
</dbReference>
<dbReference type="GO" id="GO:0044331">
    <property type="term" value="P:cell-cell adhesion mediated by cadherin"/>
    <property type="evidence" value="ECO:0000315"/>
    <property type="project" value="UniProtKB"/>
</dbReference>
<dbReference type="GO" id="GO:1905554">
    <property type="term" value="P:negative regulation of blood vessel branching"/>
    <property type="evidence" value="ECO:0000315"/>
    <property type="project" value="BHF-UCL"/>
</dbReference>
<dbReference type="GO" id="GO:0010829">
    <property type="term" value="P:negative regulation of D-glucose transmembrane transport"/>
    <property type="evidence" value="ECO:0000314"/>
    <property type="project" value="UniProt"/>
</dbReference>
<dbReference type="GO" id="GO:1902532">
    <property type="term" value="P:negative regulation of intracellular signal transduction"/>
    <property type="evidence" value="ECO:0000315"/>
    <property type="project" value="BHF-UCL"/>
</dbReference>
<dbReference type="GO" id="GO:0000122">
    <property type="term" value="P:negative regulation of transcription by RNA polymerase II"/>
    <property type="evidence" value="ECO:0000315"/>
    <property type="project" value="BHF-UCL"/>
</dbReference>
<dbReference type="GO" id="GO:0150107">
    <property type="term" value="P:positive regulation of protein localization to cell-cell junction"/>
    <property type="evidence" value="ECO:0000315"/>
    <property type="project" value="UniProtKB"/>
</dbReference>
<dbReference type="GO" id="GO:0050821">
    <property type="term" value="P:protein stabilization"/>
    <property type="evidence" value="ECO:0000315"/>
    <property type="project" value="UniProtKB"/>
</dbReference>
<dbReference type="GO" id="GO:0099072">
    <property type="term" value="P:regulation of postsynaptic membrane neurotransmitter receptor levels"/>
    <property type="evidence" value="ECO:0000314"/>
    <property type="project" value="SynGO"/>
</dbReference>
<dbReference type="GO" id="GO:0016055">
    <property type="term" value="P:Wnt signaling pathway"/>
    <property type="evidence" value="ECO:0007669"/>
    <property type="project" value="UniProtKB-KW"/>
</dbReference>
<dbReference type="FunFam" id="1.25.10.10:FF:000007">
    <property type="entry name" value="ARVCF, delta catenin family member"/>
    <property type="match status" value="1"/>
</dbReference>
<dbReference type="Gene3D" id="1.25.10.10">
    <property type="entry name" value="Leucine-rich Repeat Variant"/>
    <property type="match status" value="1"/>
</dbReference>
<dbReference type="InterPro" id="IPR011989">
    <property type="entry name" value="ARM-like"/>
</dbReference>
<dbReference type="InterPro" id="IPR016024">
    <property type="entry name" value="ARM-type_fold"/>
</dbReference>
<dbReference type="InterPro" id="IPR000225">
    <property type="entry name" value="Armadillo"/>
</dbReference>
<dbReference type="InterPro" id="IPR028435">
    <property type="entry name" value="Plakophilin/d_Catenin"/>
</dbReference>
<dbReference type="PANTHER" id="PTHR10372:SF6">
    <property type="entry name" value="CATENIN DELTA-1"/>
    <property type="match status" value="1"/>
</dbReference>
<dbReference type="PANTHER" id="PTHR10372">
    <property type="entry name" value="PLAKOPHILLIN-RELATED"/>
    <property type="match status" value="1"/>
</dbReference>
<dbReference type="Pfam" id="PF00514">
    <property type="entry name" value="Arm"/>
    <property type="match status" value="4"/>
</dbReference>
<dbReference type="SMART" id="SM00185">
    <property type="entry name" value="ARM"/>
    <property type="match status" value="7"/>
</dbReference>
<dbReference type="SUPFAM" id="SSF48371">
    <property type="entry name" value="ARM repeat"/>
    <property type="match status" value="1"/>
</dbReference>
<dbReference type="PROSITE" id="PS50176">
    <property type="entry name" value="ARM_REPEAT"/>
    <property type="match status" value="3"/>
</dbReference>
<name>CTND1_HUMAN</name>
<protein>
    <recommendedName>
        <fullName>Catenin delta-1</fullName>
    </recommendedName>
    <alternativeName>
        <fullName>Cadherin-associated Src substrate</fullName>
        <shortName>CAS</shortName>
    </alternativeName>
    <alternativeName>
        <fullName>p120 catenin</fullName>
        <shortName>p120(ctn)</shortName>
    </alternativeName>
    <alternativeName>
        <fullName>p120(cas)</fullName>
    </alternativeName>
</protein>
<feature type="chain" id="PRO_0000064296" description="Catenin delta-1">
    <location>
        <begin position="1"/>
        <end position="968"/>
    </location>
</feature>
<feature type="repeat" description="ARM 1">
    <location>
        <begin position="358"/>
        <end position="395"/>
    </location>
</feature>
<feature type="repeat" description="ARM 2">
    <location>
        <begin position="398"/>
        <end position="437"/>
    </location>
</feature>
<feature type="repeat" description="ARM 3">
    <location>
        <begin position="441"/>
        <end position="475"/>
    </location>
</feature>
<feature type="repeat" description="ARM 4">
    <location>
        <begin position="476"/>
        <end position="516"/>
    </location>
</feature>
<feature type="repeat" description="ARM 5">
    <location>
        <begin position="534"/>
        <end position="573"/>
    </location>
</feature>
<feature type="repeat" description="ARM 6">
    <location>
        <begin position="583"/>
        <end position="624"/>
    </location>
</feature>
<feature type="repeat" description="ARM 7">
    <location>
        <begin position="653"/>
        <end position="693"/>
    </location>
</feature>
<feature type="repeat" description="ARM 8">
    <location>
        <begin position="700"/>
        <end position="739"/>
    </location>
</feature>
<feature type="repeat" description="ARM 9">
    <location>
        <begin position="740"/>
        <end position="780"/>
    </location>
</feature>
<feature type="repeat" description="ARM 10">
    <location>
        <begin position="781"/>
        <end position="826"/>
    </location>
</feature>
<feature type="region of interest" description="Necessary and sufficient for interaction with CCDC85B" evidence="19">
    <location>
        <begin position="1"/>
        <end position="357"/>
    </location>
</feature>
<feature type="region of interest" description="Disordered" evidence="3">
    <location>
        <begin position="855"/>
        <end position="944"/>
    </location>
</feature>
<feature type="coiled-coil region" evidence="2">
    <location>
        <begin position="10"/>
        <end position="46"/>
    </location>
</feature>
<feature type="compositionally biased region" description="Basic and acidic residues" evidence="3">
    <location>
        <begin position="875"/>
        <end position="888"/>
    </location>
</feature>
<feature type="compositionally biased region" description="Polar residues" evidence="3">
    <location>
        <begin position="889"/>
        <end position="908"/>
    </location>
</feature>
<feature type="compositionally biased region" description="Basic and acidic residues" evidence="3">
    <location>
        <begin position="909"/>
        <end position="922"/>
    </location>
</feature>
<feature type="site" description="Essential for interaction with cadherins" evidence="17">
    <location>
        <position position="401"/>
    </location>
</feature>
<feature type="site" description="Essential for interaction with cadherins" evidence="17">
    <location>
        <position position="478"/>
    </location>
</feature>
<feature type="modified residue" description="N-acetylmethionine" evidence="33 35 36">
    <location>
        <position position="1"/>
    </location>
</feature>
<feature type="modified residue" description="Phosphoserine" evidence="33 37">
    <location>
        <position position="4"/>
    </location>
</feature>
<feature type="modified residue" description="Phosphoserine" evidence="30 32 33 37">
    <location>
        <position position="47"/>
    </location>
</feature>
<feature type="modified residue" description="Phosphothreonine" evidence="37">
    <location>
        <position position="59"/>
    </location>
</feature>
<feature type="modified residue" description="Phosphotyrosine; by FYN" evidence="12">
    <location>
        <position position="112"/>
    </location>
</feature>
<feature type="modified residue" description="Phosphoserine" evidence="38">
    <location>
        <position position="125"/>
    </location>
</feature>
<feature type="modified residue" description="Phosphotyrosine" evidence="1">
    <location>
        <position position="217"/>
    </location>
</feature>
<feature type="modified residue" description="Phosphotyrosine" evidence="1">
    <location>
        <position position="221"/>
    </location>
</feature>
<feature type="modified residue" description="Phosphoserine" evidence="38">
    <location>
        <position position="225"/>
    </location>
</feature>
<feature type="modified residue" description="Phosphotyrosine" evidence="1">
    <location>
        <position position="228"/>
    </location>
</feature>
<feature type="modified residue" description="Phosphoserine" evidence="32 34">
    <location>
        <position position="230"/>
    </location>
</feature>
<feature type="modified residue" description="Phosphoserine" evidence="37 38">
    <location>
        <position position="252"/>
    </location>
</feature>
<feature type="modified residue" description="Phosphotyrosine" evidence="1">
    <location>
        <position position="257"/>
    </location>
</feature>
<feature type="modified residue" description="Phosphoserine" evidence="30 37 38">
    <location>
        <position position="268"/>
    </location>
</feature>
<feature type="modified residue" description="Phosphoserine" evidence="30 37 38">
    <location>
        <position position="269"/>
    </location>
</feature>
<feature type="modified residue" description="Phosphotyrosine" evidence="1">
    <location>
        <position position="280"/>
    </location>
</feature>
<feature type="modified residue" description="Phosphoserine; by PAK5" evidence="18 31 32 37">
    <location>
        <position position="288"/>
    </location>
</feature>
<feature type="modified residue" description="Phosphotyrosine" evidence="1">
    <location>
        <position position="291"/>
    </location>
</feature>
<feature type="modified residue" description="Phosphoserine" evidence="1">
    <location>
        <position position="300"/>
    </location>
</feature>
<feature type="modified residue" description="Phosphothreonine" evidence="1">
    <location>
        <position position="304"/>
    </location>
</feature>
<feature type="modified residue" description="Phosphoserine" evidence="34">
    <location>
        <position position="320"/>
    </location>
</feature>
<feature type="modified residue" description="Phosphoserine" evidence="37 38">
    <location>
        <position position="346"/>
    </location>
</feature>
<feature type="modified residue" description="Phosphoserine" evidence="30 34 37 38">
    <location>
        <position position="349"/>
    </location>
</feature>
<feature type="modified residue" description="Phosphoserine" evidence="30 37 38">
    <location>
        <position position="352"/>
    </location>
</feature>
<feature type="modified residue" description="Phosphoserine" evidence="38">
    <location>
        <position position="617"/>
    </location>
</feature>
<feature type="modified residue" description="Phosphoserine" evidence="1">
    <location>
        <position position="713"/>
    </location>
</feature>
<feature type="modified residue" description="Phosphoserine" evidence="33">
    <location>
        <position position="811"/>
    </location>
</feature>
<feature type="modified residue" description="Phosphoserine" evidence="34 38">
    <location>
        <position position="847"/>
    </location>
</feature>
<feature type="modified residue" description="Phosphoserine" evidence="34 38">
    <location>
        <position position="857"/>
    </location>
</feature>
<feature type="modified residue" description="Phosphoserine" evidence="34">
    <location>
        <position position="859"/>
    </location>
</feature>
<feature type="modified residue" description="Phosphoserine" evidence="37">
    <location>
        <position position="861"/>
    </location>
</feature>
<feature type="modified residue" description="Phosphoserine" evidence="34 37 38">
    <location>
        <position position="864"/>
    </location>
</feature>
<feature type="modified residue" description="Phosphotyrosine" evidence="38">
    <location>
        <position position="865"/>
    </location>
</feature>
<feature type="modified residue" description="Phosphoserine" evidence="38">
    <location>
        <position position="868"/>
    </location>
</feature>
<feature type="modified residue" description="Phosphothreonine" evidence="37 38">
    <location>
        <position position="869"/>
    </location>
</feature>
<feature type="modified residue" description="Phosphoserine" evidence="34">
    <location>
        <position position="879"/>
    </location>
</feature>
<feature type="modified residue" description="Phosphoserine" evidence="1">
    <location>
        <position position="899"/>
    </location>
</feature>
<feature type="modified residue" description="Phosphotyrosine" evidence="1">
    <location>
        <position position="904"/>
    </location>
</feature>
<feature type="modified residue" description="Phosphothreonine" evidence="37">
    <location>
        <position position="906"/>
    </location>
</feature>
<feature type="modified residue" description="Phosphothreonine" evidence="33">
    <location>
        <position position="916"/>
    </location>
</feature>
<feature type="modified residue" description="Phosphoserine" evidence="33 34 37 38">
    <location>
        <position position="920"/>
    </location>
</feature>
<feature type="modified residue" description="Phosphoserine" evidence="38">
    <location>
        <position position="943"/>
    </location>
</feature>
<feature type="cross-link" description="Glycyl lysine isopeptide (Lys-Gly) (interchain with G-Cter in SUMO2)" evidence="39">
    <location>
        <position position="421"/>
    </location>
</feature>
<feature type="cross-link" description="Glycyl lysine isopeptide (Lys-Gly) (interchain with G-Cter in SUMO2)" evidence="39">
    <location>
        <position position="517"/>
    </location>
</feature>
<feature type="cross-link" description="Glycyl lysine isopeptide (Lys-Gly) (interchain with G-Cter in SUMO2)" evidence="39">
    <location>
        <position position="882"/>
    </location>
</feature>
<feature type="splice variant" id="VSP_006742" description="In isoform 4ABC, isoform 4AB, isoform 4AC, isoform 4BC, isoform 4A, isoform 4B, isoform 4C and isoform 4." evidence="28">
    <location>
        <begin position="1"/>
        <end position="323"/>
    </location>
</feature>
<feature type="splice variant" id="VSP_006741" description="In isoform 3ABC, isoform 3AB, isoform 3AC, isoform 3BC, isoform 3A, isoform 3B, isoform 3C and isoform 3." evidence="28">
    <location>
        <begin position="1"/>
        <end position="101"/>
    </location>
</feature>
<feature type="splice variant" id="VSP_006740" description="In isoform 2ABC, isoform 2AB, isoform 2AC, isoform 2BC, isoform 2A, isoform 2B, isoform 2C and isoform 2." evidence="28">
    <location>
        <begin position="1"/>
        <end position="54"/>
    </location>
</feature>
<feature type="splice variant" id="VSP_006743" description="In isoform 1AB, isoform 1A, isoform 1B, isoform 1, isoform 2AB, isoform 2A, isoform 2B, isoform 2, isoform 3AB, isoform 3A, isoform 3B, isoform 3, isoform 4AB, isoform 4A, isoform 4B and isoform 4." evidence="25">
    <location>
        <begin position="626"/>
        <end position="631"/>
    </location>
</feature>
<feature type="splice variant" id="VSP_006744" description="In isoform 1BC, isoform 1B, isoform 1C, isoform 1, isoform 2BC, isoform 2B, isoform 2C, isoform 2, isoform 3BC, isoform 3B, isoform 3C, isoform 3, isoform 4BC, isoform 4B, isoform 4C and isoform 4." evidence="28">
    <location>
        <begin position="880"/>
        <end position="900"/>
    </location>
</feature>
<feature type="splice variant" id="VSP_006745" description="In isoform 1AC, isoform 1A, isoform 1C, isoform 1, isoform 2AC, isoform 2A, isoform 2C, isoform 2, isoform 3AC, isoform 3A, isoform 3C, isoform 3, isoform 4AC, isoform 4A, isoform 4C and isoform 4." evidence="24 25 27">
    <location>
        <begin position="937"/>
        <end position="965"/>
    </location>
</feature>
<feature type="sequence variant" id="VAR_038255" description="In dbSNP:rs11229133.">
    <original>S</original>
    <variation>F</variation>
    <location>
        <position position="171"/>
    </location>
</feature>
<feature type="sequence variant" id="VAR_020929" description="In dbSNP:rs11570194." evidence="23">
    <original>Y</original>
    <variation>C</variation>
    <location>
        <position position="217"/>
    </location>
</feature>
<feature type="sequence variant" id="VAR_079395" description="In BCDS2." evidence="21">
    <location>
        <begin position="365"/>
        <end position="968"/>
    </location>
</feature>
<feature type="sequence variant" id="VAR_020930" description="In dbSNP:rs11570199." evidence="23">
    <original>R</original>
    <variation>C</variation>
    <location>
        <position position="464"/>
    </location>
</feature>
<feature type="sequence variant" id="VAR_079396" description="In BCDS2." evidence="21">
    <location>
        <begin position="700"/>
        <end position="968"/>
    </location>
</feature>
<feature type="sequence variant" id="VAR_020931" description="In dbSNP:rs11570222." evidence="23">
    <original>R</original>
    <variation>K</variation>
    <location>
        <position position="915"/>
    </location>
</feature>
<feature type="mutagenesis site" description="Severely disrupts cadherin interaction." evidence="17">
    <original>W</original>
    <variation>A</variation>
    <location>
        <position position="363"/>
    </location>
</feature>
<feature type="mutagenesis site" description="Complete loss of cadherin interaction." evidence="17">
    <original>K</original>
    <variation>M</variation>
    <location>
        <position position="401"/>
    </location>
</feature>
<feature type="mutagenesis site" description="Severely disrupts cadherin interaction." evidence="17">
    <original>K</original>
    <variation>M</variation>
    <location>
        <position position="444"/>
    </location>
</feature>
<feature type="mutagenesis site" description="Severely disrupts cadherin interaction." evidence="17">
    <original>W</original>
    <variation>A</variation>
    <location>
        <position position="477"/>
    </location>
</feature>
<feature type="mutagenesis site" description="Complete loss of cadherin interaction." evidence="17">
    <original>N</original>
    <variation>A</variation>
    <location>
        <position position="478"/>
    </location>
</feature>
<feature type="sequence conflict" description="In Ref. 2; BAA20838." evidence="28" ref="2">
    <original>R</original>
    <variation>M</variation>
    <location>
        <position position="319"/>
    </location>
</feature>
<feature type="sequence conflict" description="In Ref. 6; AAH75795." evidence="28" ref="6">
    <original>D</original>
    <variation>G</variation>
    <location>
        <position position="380"/>
    </location>
</feature>
<feature type="helix" evidence="40">
    <location>
        <begin position="368"/>
        <end position="374"/>
    </location>
</feature>
<feature type="helix" evidence="40">
    <location>
        <begin position="380"/>
        <end position="394"/>
    </location>
</feature>
<feature type="helix" evidence="40">
    <location>
        <begin position="398"/>
        <end position="406"/>
    </location>
</feature>
<feature type="helix" evidence="40">
    <location>
        <begin position="409"/>
        <end position="415"/>
    </location>
</feature>
<feature type="helix" evidence="40">
    <location>
        <begin position="416"/>
        <end position="418"/>
    </location>
</feature>
<feature type="helix" evidence="40">
    <location>
        <begin position="422"/>
        <end position="435"/>
    </location>
</feature>
<feature type="strand" evidence="40">
    <location>
        <begin position="437"/>
        <end position="439"/>
    </location>
</feature>
<feature type="helix" evidence="40">
    <location>
        <begin position="441"/>
        <end position="449"/>
    </location>
</feature>
<feature type="helix" evidence="40">
    <location>
        <begin position="452"/>
        <end position="462"/>
    </location>
</feature>
<feature type="helix" evidence="40">
    <location>
        <begin position="466"/>
        <end position="479"/>
    </location>
</feature>
<feature type="helix" evidence="40">
    <location>
        <begin position="483"/>
        <end position="485"/>
    </location>
</feature>
<feature type="helix" evidence="40">
    <location>
        <begin position="486"/>
        <end position="492"/>
    </location>
</feature>
<feature type="helix" evidence="40">
    <location>
        <begin position="494"/>
        <end position="500"/>
    </location>
</feature>
<feature type="helix" evidence="40">
    <location>
        <begin position="502"/>
        <end position="506"/>
    </location>
</feature>
<feature type="helix" evidence="40">
    <location>
        <begin position="524"/>
        <end position="537"/>
    </location>
</feature>
<feature type="helix" evidence="40">
    <location>
        <begin position="542"/>
        <end position="550"/>
    </location>
</feature>
<feature type="helix" evidence="40">
    <location>
        <begin position="554"/>
        <end position="567"/>
    </location>
</feature>
<feature type="helix" evidence="40">
    <location>
        <begin position="574"/>
        <end position="587"/>
    </location>
</feature>
<feature type="helix" evidence="40">
    <location>
        <begin position="590"/>
        <end position="593"/>
    </location>
</feature>
<feature type="helix" evidence="40">
    <location>
        <begin position="655"/>
        <end position="660"/>
    </location>
</feature>
<feature type="helix" evidence="40">
    <location>
        <begin position="662"/>
        <end position="674"/>
    </location>
</feature>
<feature type="helix" evidence="40">
    <location>
        <begin position="678"/>
        <end position="692"/>
    </location>
</feature>
<feature type="helix" evidence="40">
    <location>
        <begin position="697"/>
        <end position="706"/>
    </location>
</feature>
<feature type="helix" evidence="40">
    <location>
        <begin position="709"/>
        <end position="717"/>
    </location>
</feature>
<feature type="helix" evidence="40">
    <location>
        <begin position="718"/>
        <end position="720"/>
    </location>
</feature>
<feature type="helix" evidence="40">
    <location>
        <begin position="724"/>
        <end position="738"/>
    </location>
</feature>
<feature type="helix" evidence="40">
    <location>
        <begin position="744"/>
        <end position="757"/>
    </location>
</feature>
<feature type="strand" evidence="40">
    <location>
        <begin position="759"/>
        <end position="763"/>
    </location>
</feature>
<feature type="helix" evidence="40">
    <location>
        <begin position="766"/>
        <end position="768"/>
    </location>
</feature>
<feature type="helix" evidence="40">
    <location>
        <begin position="772"/>
        <end position="786"/>
    </location>
</feature>
<feature type="helix" evidence="40">
    <location>
        <begin position="790"/>
        <end position="798"/>
    </location>
</feature>
<feature type="helix" evidence="40">
    <location>
        <begin position="801"/>
        <end position="809"/>
    </location>
</feature>
<feature type="strand" evidence="40">
    <location>
        <begin position="812"/>
        <end position="814"/>
    </location>
</feature>
<feature type="helix" evidence="40">
    <location>
        <begin position="816"/>
        <end position="830"/>
    </location>
</feature>
<feature type="helix" evidence="40">
    <location>
        <begin position="833"/>
        <end position="840"/>
    </location>
</feature>
<feature type="turn" evidence="40">
    <location>
        <begin position="841"/>
        <end position="843"/>
    </location>
</feature>
<feature type="helix" evidence="40">
    <location>
        <begin position="846"/>
        <end position="849"/>
    </location>
</feature>
<feature type="short sequence motif" description="Nuclear localization signal (NLS)" evidence="1">
    <location sequence="O60716-2">
        <begin position="622"/>
        <end position="629"/>
    </location>
</feature>
<feature type="modified residue" description="Phosphothreonine" evidence="32">
    <location sequence="O60716-3">
        <position position="916"/>
    </location>
</feature>
<feature type="short sequence motif" description="Nuclear localization signal (NLS)" evidence="1">
    <location sequence="O60716-5">
        <begin position="622"/>
        <end position="629"/>
    </location>
</feature>
<feature type="modified residue" description="Phosphothreonine" evidence="15">
    <location sequence="O60716-5">
        <position position="910"/>
    </location>
</feature>
<feature type="short sequence motif" description="Nuclear localization signal (NLS)" evidence="1">
    <location sequence="O60716-6">
        <begin position="622"/>
        <end position="629"/>
    </location>
</feature>
<feature type="modified residue" description="Phosphothreonine" evidence="32">
    <location sequence="O60716-7">
        <position position="895"/>
    </location>
</feature>
<feature type="short sequence motif" description="Nuclear localization signal (NLS)" evidence="1">
    <location sequence="O60716-8">
        <begin position="622"/>
        <end position="629"/>
    </location>
</feature>
<feature type="modified residue" description="Phosphothreonine" evidence="32">
    <location sequence="O60716-8">
        <position position="889"/>
    </location>
</feature>
<feature type="short sequence motif" description="Nuclear localization signal (NLS)" evidence="1">
    <location sequence="O60716-10">
        <begin position="568"/>
        <end position="575"/>
    </location>
</feature>
<feature type="modified residue" description="Phosphothreonine" evidence="32">
    <location sequence="O60716-11">
        <position position="862"/>
    </location>
</feature>
<feature type="short sequence motif" description="Nuclear localization signal (NLS)" evidence="1">
    <location sequence="O60716-13">
        <begin position="622"/>
        <end position="629"/>
    </location>
</feature>
<feature type="modified residue" description="Phosphothreonine" evidence="15">
    <location sequence="O60716-13">
        <position position="856"/>
    </location>
</feature>
<feature type="short sequence motif" description="Nuclear localization signal (NLS)" evidence="1">
    <location sequence="O60716-14">
        <begin position="622"/>
        <end position="629"/>
    </location>
</feature>
<feature type="modified residue" description="Phosphothreonine" evidence="32">
    <location sequence="O60716-15">
        <position position="841"/>
    </location>
</feature>
<feature type="short sequence motif" description="Nuclear localization signal (NLS)" evidence="1">
    <location sequence="O60716-16">
        <begin position="622"/>
        <end position="629"/>
    </location>
</feature>
<feature type="modified residue" description="Phosphothreonine" evidence="32">
    <location sequence="O60716-16">
        <position position="835"/>
    </location>
</feature>
<feature type="short sequence motif" description="Nuclear localization signal (NLS)" evidence="1">
    <location sequence="O60716-18">
        <begin position="521"/>
        <end position="528"/>
    </location>
</feature>
<feature type="modified residue" description="Phosphothreonine" evidence="32">
    <location sequence="O60716-19">
        <position position="815"/>
    </location>
</feature>
<feature type="short sequence motif" description="Nuclear localization signal (NLS)" evidence="1">
    <location sequence="O60716-21">
        <begin position="521"/>
        <end position="528"/>
    </location>
</feature>
<feature type="modified residue" description="Phosphothreonine" evidence="15">
    <location sequence="O60716-21">
        <position position="809"/>
    </location>
</feature>
<feature type="short sequence motif" description="Nuclear localization signal (NLS)" evidence="1">
    <location sequence="O60716-22">
        <begin position="521"/>
        <end position="528"/>
    </location>
</feature>
<feature type="modified residue" description="Phosphothreonine" evidence="32">
    <location sequence="O60716-23">
        <position position="794"/>
    </location>
</feature>
<feature type="short sequence motif" description="Nuclear localization signal (NLS)" evidence="1">
    <location sequence="O60716-24">
        <begin position="521"/>
        <end position="528"/>
    </location>
</feature>
<feature type="modified residue" description="Phosphothreonine" evidence="15">
    <location sequence="O60716-24">
        <position position="788"/>
    </location>
</feature>
<feature type="short sequence motif" description="Nuclear localization signal (NLS)" evidence="1">
    <location sequence="O60716-26">
        <begin position="299"/>
        <end position="306"/>
    </location>
</feature>
<feature type="modified residue" description="Phosphothreonine" evidence="32">
    <location sequence="O60716-27">
        <position position="593"/>
    </location>
</feature>
<feature type="short sequence motif" description="Nuclear localization signal (NLS)" evidence="1">
    <location sequence="O60716-29">
        <begin position="299"/>
        <end position="306"/>
    </location>
</feature>
<feature type="modified residue" description="Phosphothreonine" evidence="32">
    <location sequence="O60716-29">
        <position position="587"/>
    </location>
</feature>
<feature type="short sequence motif" description="Nuclear localization signal (NLS)" evidence="1">
    <location sequence="O60716-30">
        <begin position="299"/>
        <end position="306"/>
    </location>
</feature>
<feature type="modified residue" description="Phosphothreonine" evidence="32">
    <location sequence="O60716-31">
        <position position="572"/>
    </location>
</feature>
<feature type="short sequence motif" description="Nuclear localization signal (NLS)" evidence="1">
    <location sequence="O60716-32">
        <begin position="299"/>
        <end position="306"/>
    </location>
</feature>
<feature type="modified residue" description="Phosphothreonine" evidence="15">
    <location sequence="O60716-32">
        <position position="566"/>
    </location>
</feature>
<proteinExistence type="evidence at protein level"/>
<organism>
    <name type="scientific">Homo sapiens</name>
    <name type="common">Human</name>
    <dbReference type="NCBI Taxonomy" id="9606"/>
    <lineage>
        <taxon>Eukaryota</taxon>
        <taxon>Metazoa</taxon>
        <taxon>Chordata</taxon>
        <taxon>Craniata</taxon>
        <taxon>Vertebrata</taxon>
        <taxon>Euteleostomi</taxon>
        <taxon>Mammalia</taxon>
        <taxon>Eutheria</taxon>
        <taxon>Euarchontoglires</taxon>
        <taxon>Primates</taxon>
        <taxon>Haplorrhini</taxon>
        <taxon>Catarrhini</taxon>
        <taxon>Hominidae</taxon>
        <taxon>Homo</taxon>
    </lineage>
</organism>
<sequence>MDDSEVESTASILASVKEQEAQFEKLTRALEEERRHVSAQLERVRVSPQDANPLMANGTLTRRHQNGRFVGDADLERQKFSDLKLNGPQDHSHLLYSTIPRMQEPGQIVETYTEEDPEGAMSVVSVETSDDGTTRRTETTVKKVVKTVTTRTVQPVAMGPDGLPVDASSVSNNYIQTLGRDFRKNGNGGPGPYVGQAGTATLPRNFHYPPDGYSRHYEDGYPGGSDNYGSLSRVTRIEERYRPSMEGYRAPSRQDVYGPQPQVRVGGSSVDLHRFHPEPYGLEDDQRSMGYDDLDYGMMSDYGTARRTGTPSDPRRRLRSYEDMIGEEVPSDQYYWAPLAQHERGSLASLDSLRKGGPPPPNWRQPELPEVIAMLGFRLDAVKSNAAAYLQHLCYRNDKVKTDVRKLKGIPVLVGLLDHPKKEVHLGACGALKNISFGRDQDNKIAIKNCDGVPALVRLLRKARDMDLTEVITGTLWNLSSHDSIKMEIVDHALHALTDEVIIPHSGWEREPNEDCKPRHIEWESVLTNTAGCLRNVSSERSEARRKLRECDGLVDALIFIVQAEIGQKDSDSKLVENCVCLLRNLSYQVHREIPQAERYQEAAPNVANNTGPHAASCFGAKKGKDEWFSRGKKPIEDPANDTVDFPKRTSPARGYELLFQPEVVRIYISLLKESKTPAILEASAGAIQNLCAGRWTYGRYIRSALRQEKALSAIADLLTNEHERVVKAASGALRNLAVDARNKELIGKHAIPNLVKNLPGGQQNSSWNFSEDTVISILNTINEVIAENLEAAKKLRETQGIEKLVLINKSGNRSEKEVRAAALVLQTIWGYKELRKPLEKEGWKKSDFQVNLNNASRSQSSHSYDDSTLPLIDRNQKSDKKPDREEIQMSNMGSNTKSLDNNYSTPNERGDHNRTLDRSGDLGDMEPLKGTTPLMQDEGQESLEEELDVLVLDDEGGQVSYPSMQKI</sequence>
<accession>O60716</accession>
<accession>A8K939</accession>
<accession>O15088</accession>
<accession>O60713</accession>
<accession>O60714</accession>
<accession>O60715</accession>
<accession>O60935</accession>
<accession>Q6DHZ7</accession>
<accession>Q6RBX8</accession>
<accession>Q9UP71</accession>
<accession>Q9UP72</accession>
<accession>Q9UP73</accession>
<reference key="1">
    <citation type="journal article" date="1998" name="Genomics">
        <title>Molecular cloning of the human p120ctn catenin gene (CTNND1): expression of multiple alternatively spliced isoforms.</title>
        <authorList>
            <person name="Keirsebilck A."/>
            <person name="Bonne S."/>
            <person name="Staes K."/>
            <person name="van Hengel J."/>
            <person name="Nollet F."/>
            <person name="Reynolds A."/>
            <person name="van Roy F."/>
        </authorList>
    </citation>
    <scope>NUCLEOTIDE SEQUENCE [MRNA]</scope>
    <scope>ALTERNATIVE SPLICING</scope>
    <source>
        <tissue>Fetal kidney</tissue>
    </source>
</reference>
<reference key="2">
    <citation type="journal article" date="1997" name="DNA Res.">
        <title>Prediction of the coding sequences of unidentified human genes. VII. The complete sequences of 100 new cDNA clones from brain which can code for large proteins in vitro.</title>
        <authorList>
            <person name="Nagase T."/>
            <person name="Ishikawa K."/>
            <person name="Nakajima D."/>
            <person name="Ohira M."/>
            <person name="Seki N."/>
            <person name="Miyajima N."/>
            <person name="Tanaka A."/>
            <person name="Kotani H."/>
            <person name="Nomura N."/>
            <person name="Ohara O."/>
        </authorList>
    </citation>
    <scope>NUCLEOTIDE SEQUENCE [LARGE SCALE MRNA] (ISOFORM 1AC)</scope>
    <source>
        <tissue>Brain</tissue>
    </source>
</reference>
<reference key="3">
    <citation type="journal article" date="2004" name="Nat. Genet.">
        <title>Complete sequencing and characterization of 21,243 full-length human cDNAs.</title>
        <authorList>
            <person name="Ota T."/>
            <person name="Suzuki Y."/>
            <person name="Nishikawa T."/>
            <person name="Otsuki T."/>
            <person name="Sugiyama T."/>
            <person name="Irie R."/>
            <person name="Wakamatsu A."/>
            <person name="Hayashi K."/>
            <person name="Sato H."/>
            <person name="Nagai K."/>
            <person name="Kimura K."/>
            <person name="Makita H."/>
            <person name="Sekine M."/>
            <person name="Obayashi M."/>
            <person name="Nishi T."/>
            <person name="Shibahara T."/>
            <person name="Tanaka T."/>
            <person name="Ishii S."/>
            <person name="Yamamoto J."/>
            <person name="Saito K."/>
            <person name="Kawai Y."/>
            <person name="Isono Y."/>
            <person name="Nakamura Y."/>
            <person name="Nagahari K."/>
            <person name="Murakami K."/>
            <person name="Yasuda T."/>
            <person name="Iwayanagi T."/>
            <person name="Wagatsuma M."/>
            <person name="Shiratori A."/>
            <person name="Sudo H."/>
            <person name="Hosoiri T."/>
            <person name="Kaku Y."/>
            <person name="Kodaira H."/>
            <person name="Kondo H."/>
            <person name="Sugawara M."/>
            <person name="Takahashi M."/>
            <person name="Kanda K."/>
            <person name="Yokoi T."/>
            <person name="Furuya T."/>
            <person name="Kikkawa E."/>
            <person name="Omura Y."/>
            <person name="Abe K."/>
            <person name="Kamihara K."/>
            <person name="Katsuta N."/>
            <person name="Sato K."/>
            <person name="Tanikawa M."/>
            <person name="Yamazaki M."/>
            <person name="Ninomiya K."/>
            <person name="Ishibashi T."/>
            <person name="Yamashita H."/>
            <person name="Murakawa K."/>
            <person name="Fujimori K."/>
            <person name="Tanai H."/>
            <person name="Kimata M."/>
            <person name="Watanabe M."/>
            <person name="Hiraoka S."/>
            <person name="Chiba Y."/>
            <person name="Ishida S."/>
            <person name="Ono Y."/>
            <person name="Takiguchi S."/>
            <person name="Watanabe S."/>
            <person name="Yosida M."/>
            <person name="Hotuta T."/>
            <person name="Kusano J."/>
            <person name="Kanehori K."/>
            <person name="Takahashi-Fujii A."/>
            <person name="Hara H."/>
            <person name="Tanase T.-O."/>
            <person name="Nomura Y."/>
            <person name="Togiya S."/>
            <person name="Komai F."/>
            <person name="Hara R."/>
            <person name="Takeuchi K."/>
            <person name="Arita M."/>
            <person name="Imose N."/>
            <person name="Musashino K."/>
            <person name="Yuuki H."/>
            <person name="Oshima A."/>
            <person name="Sasaki N."/>
            <person name="Aotsuka S."/>
            <person name="Yoshikawa Y."/>
            <person name="Matsunawa H."/>
            <person name="Ichihara T."/>
            <person name="Shiohata N."/>
            <person name="Sano S."/>
            <person name="Moriya S."/>
            <person name="Momiyama H."/>
            <person name="Satoh N."/>
            <person name="Takami S."/>
            <person name="Terashima Y."/>
            <person name="Suzuki O."/>
            <person name="Nakagawa S."/>
            <person name="Senoh A."/>
            <person name="Mizoguchi H."/>
            <person name="Goto Y."/>
            <person name="Shimizu F."/>
            <person name="Wakebe H."/>
            <person name="Hishigaki H."/>
            <person name="Watanabe T."/>
            <person name="Sugiyama A."/>
            <person name="Takemoto M."/>
            <person name="Kawakami B."/>
            <person name="Yamazaki M."/>
            <person name="Watanabe K."/>
            <person name="Kumagai A."/>
            <person name="Itakura S."/>
            <person name="Fukuzumi Y."/>
            <person name="Fujimori Y."/>
            <person name="Komiyama M."/>
            <person name="Tashiro H."/>
            <person name="Tanigami A."/>
            <person name="Fujiwara T."/>
            <person name="Ono T."/>
            <person name="Yamada K."/>
            <person name="Fujii Y."/>
            <person name="Ozaki K."/>
            <person name="Hirao M."/>
            <person name="Ohmori Y."/>
            <person name="Kawabata A."/>
            <person name="Hikiji T."/>
            <person name="Kobatake N."/>
            <person name="Inagaki H."/>
            <person name="Ikema Y."/>
            <person name="Okamoto S."/>
            <person name="Okitani R."/>
            <person name="Kawakami T."/>
            <person name="Noguchi S."/>
            <person name="Itoh T."/>
            <person name="Shigeta K."/>
            <person name="Senba T."/>
            <person name="Matsumura K."/>
            <person name="Nakajima Y."/>
            <person name="Mizuno T."/>
            <person name="Morinaga M."/>
            <person name="Sasaki M."/>
            <person name="Togashi T."/>
            <person name="Oyama M."/>
            <person name="Hata H."/>
            <person name="Watanabe M."/>
            <person name="Komatsu T."/>
            <person name="Mizushima-Sugano J."/>
            <person name="Satoh T."/>
            <person name="Shirai Y."/>
            <person name="Takahashi Y."/>
            <person name="Nakagawa K."/>
            <person name="Okumura K."/>
            <person name="Nagase T."/>
            <person name="Nomura N."/>
            <person name="Kikuchi H."/>
            <person name="Masuho Y."/>
            <person name="Yamashita R."/>
            <person name="Nakai K."/>
            <person name="Yada T."/>
            <person name="Nakamura Y."/>
            <person name="Ohara O."/>
            <person name="Isogai T."/>
            <person name="Sugano S."/>
        </authorList>
    </citation>
    <scope>NUCLEOTIDE SEQUENCE [LARGE SCALE MRNA] (ISOFORM 1AC)</scope>
    <source>
        <tissue>Testis</tissue>
    </source>
</reference>
<reference key="4">
    <citation type="submission" date="2003-12" db="EMBL/GenBank/DDBJ databases">
        <authorList>
            <consortium name="NIEHS SNPs program"/>
        </authorList>
    </citation>
    <scope>NUCLEOTIDE SEQUENCE [GENOMIC DNA]</scope>
    <scope>VARIANTS CYS-217; CYS-464 AND LYS-915</scope>
</reference>
<reference key="5">
    <citation type="journal article" date="2006" name="Nature">
        <title>Human chromosome 11 DNA sequence and analysis including novel gene identification.</title>
        <authorList>
            <person name="Taylor T.D."/>
            <person name="Noguchi H."/>
            <person name="Totoki Y."/>
            <person name="Toyoda A."/>
            <person name="Kuroki Y."/>
            <person name="Dewar K."/>
            <person name="Lloyd C."/>
            <person name="Itoh T."/>
            <person name="Takeda T."/>
            <person name="Kim D.-W."/>
            <person name="She X."/>
            <person name="Barlow K.F."/>
            <person name="Bloom T."/>
            <person name="Bruford E."/>
            <person name="Chang J.L."/>
            <person name="Cuomo C.A."/>
            <person name="Eichler E."/>
            <person name="FitzGerald M.G."/>
            <person name="Jaffe D.B."/>
            <person name="LaButti K."/>
            <person name="Nicol R."/>
            <person name="Park H.-S."/>
            <person name="Seaman C."/>
            <person name="Sougnez C."/>
            <person name="Yang X."/>
            <person name="Zimmer A.R."/>
            <person name="Zody M.C."/>
            <person name="Birren B.W."/>
            <person name="Nusbaum C."/>
            <person name="Fujiyama A."/>
            <person name="Hattori M."/>
            <person name="Rogers J."/>
            <person name="Lander E.S."/>
            <person name="Sakaki Y."/>
        </authorList>
    </citation>
    <scope>NUCLEOTIDE SEQUENCE [LARGE SCALE GENOMIC DNA]</scope>
</reference>
<reference key="6">
    <citation type="journal article" date="2004" name="Genome Res.">
        <title>The status, quality, and expansion of the NIH full-length cDNA project: the Mammalian Gene Collection (MGC).</title>
        <authorList>
            <consortium name="The MGC Project Team"/>
        </authorList>
    </citation>
    <scope>NUCLEOTIDE SEQUENCE [LARGE SCALE MRNA] (ISOFORM 1A)</scope>
    <source>
        <tissue>Testis</tissue>
    </source>
</reference>
<reference key="7">
    <citation type="journal article" date="1995" name="Mol. Cell. Biol.">
        <title>The cytoplasmic tyrosine kinase FER is associated with the catenin-like substrate pp120 and is activated by growth factors.</title>
        <authorList>
            <person name="Kim L."/>
            <person name="Wong T.W."/>
        </authorList>
    </citation>
    <scope>PHOSPHORYLATION BY FER</scope>
    <scope>INTERACTION WITH FER</scope>
</reference>
<reference key="8">
    <citation type="journal article" date="1999" name="Mol. Cell. Biol.">
        <title>The catenin p120(ctn) interacts with Kaiso, a novel BTB/POZ domain zinc finger transcription factor.</title>
        <authorList>
            <person name="Daniel J.M."/>
            <person name="Reynolds A.B."/>
        </authorList>
    </citation>
    <scope>FUNCTION</scope>
    <scope>INTERACTION WITH ZBTB33</scope>
</reference>
<reference key="9">
    <citation type="journal article" date="2002" name="J. Cell Sci.">
        <title>Specific sequences in p120ctn determine subcellular distribution of its multiple isoforms involved in cellular adhesion of normal and malignant epithelial cells.</title>
        <authorList>
            <person name="Aho S."/>
            <person name="Levansuo L."/>
            <person name="Montonen O."/>
            <person name="Kari C."/>
            <person name="Rodeck U."/>
            <person name="Uitto J."/>
        </authorList>
    </citation>
    <scope>ALTERNATIVE INITIATION</scope>
    <scope>ALTERNATIVE SPLICING</scope>
    <scope>SUBCELLULAR LOCATION (ISOFORMS 1A; 2A; 3A; 4A AND 1AB)</scope>
    <scope>TISSUE SPECIFICITY</scope>
</reference>
<reference key="10">
    <citation type="journal article" date="2002" name="Oncogene">
        <title>The transmembrane receptor protein tyrosine phosphatase DEP1 interacts with p120(ctn).</title>
        <authorList>
            <person name="Holsinger L.J."/>
            <person name="Ward K."/>
            <person name="Duffield B."/>
            <person name="Zachwieja J."/>
            <person name="Jallal B."/>
        </authorList>
    </citation>
    <scope>PHOSPHORYLATION</scope>
    <scope>DEPHOSPHORYLATION BY PTPRJ</scope>
</reference>
<reference key="11">
    <citation type="journal article" date="2003" name="J. Cell Biol.">
        <title>A core function for p120-catenin in cadherin turnover.</title>
        <authorList>
            <person name="Davis M.A."/>
            <person name="Ireton R.C."/>
            <person name="Reynolds A.B."/>
        </authorList>
    </citation>
    <scope>FUNCTION</scope>
</reference>
<reference key="12">
    <citation type="journal article" date="2004" name="J. Biol. Chem.">
        <title>Laminar shear stress differentially modulates gene expression of p120 catenin, Kaiso transcription factor, and vascular endothelial cadherin in human coronary artery endothelial cells.</title>
        <authorList>
            <person name="Kondapalli J."/>
            <person name="Flozak A.S."/>
            <person name="Albuquerque M.L.C."/>
        </authorList>
    </citation>
    <scope>TISSUE SPECIFICITY</scope>
    <scope>INDUCTION</scope>
</reference>
<reference key="13">
    <citation type="journal article" date="2004" name="Proc. Natl. Acad. Sci. U.S.A.">
        <title>A role for Galpha12/Galpha13 in p120ctn regulation.</title>
        <authorList>
            <person name="Krakstad B.F."/>
            <person name="Ardawatia V.V."/>
            <person name="Aragay A.M."/>
        </authorList>
    </citation>
    <scope>INTERACTION WITH CDH1; GNA12 AND GNA13</scope>
    <scope>SUBCELLULAR LOCATION</scope>
</reference>
<reference key="14">
    <citation type="journal article" date="2006" name="Cancer Res.">
        <title>E-cadherin regulates human Nanos1, which interacts with p120ctn and induces tumor cell migration and invasion.</title>
        <authorList>
            <person name="Strumane K."/>
            <person name="Bonnomet A."/>
            <person name="Stove C."/>
            <person name="Vandenbroucke R."/>
            <person name="Nawrocki-Raby B."/>
            <person name="Bruyneel E."/>
            <person name="Mareel M."/>
            <person name="Birembaut P."/>
            <person name="Berx G."/>
            <person name="van Roy F."/>
        </authorList>
    </citation>
    <scope>SUBCELLULAR LOCATION</scope>
    <scope>INTERACTION WITH NANOS1</scope>
</reference>
<reference key="15">
    <citation type="journal article" date="2006" name="Cell">
        <title>Global, in vivo, and site-specific phosphorylation dynamics in signaling networks.</title>
        <authorList>
            <person name="Olsen J.V."/>
            <person name="Blagoev B."/>
            <person name="Gnad F."/>
            <person name="Macek B."/>
            <person name="Kumar C."/>
            <person name="Mortensen P."/>
            <person name="Mann M."/>
        </authorList>
    </citation>
    <scope>PHOSPHORYLATION [LARGE SCALE ANALYSIS] AT SER-47; SER-268; SER-269; SER-349 AND SER-352</scope>
    <scope>IDENTIFICATION BY MASS SPECTROMETRY [LARGE SCALE ANALYSIS]</scope>
    <source>
        <tissue>Cervix carcinoma</tissue>
    </source>
</reference>
<reference key="16">
    <citation type="journal article" date="2006" name="Nat. Biotechnol.">
        <title>A probability-based approach for high-throughput protein phosphorylation analysis and site localization.</title>
        <authorList>
            <person name="Beausoleil S.A."/>
            <person name="Villen J."/>
            <person name="Gerber S.A."/>
            <person name="Rush J."/>
            <person name="Gygi S.P."/>
        </authorList>
    </citation>
    <scope>IDENTIFICATION BY MASS SPECTROMETRY [LARGE SCALE ANALYSIS]</scope>
    <source>
        <tissue>Cervix carcinoma</tissue>
    </source>
</reference>
<reference key="17">
    <citation type="journal article" date="2006" name="Nat. Cell Biol.">
        <title>The armadillo protein p0071 regulates Rho signalling during cytokinesis.</title>
        <authorList>
            <person name="Wolf A."/>
            <person name="Keil R."/>
            <person name="Gotzl O."/>
            <person name="Mun A."/>
            <person name="Schwarze K."/>
            <person name="Lederer M."/>
            <person name="Huttelmaier S."/>
            <person name="Hatzfeld M."/>
        </authorList>
    </citation>
    <scope>SUBCELLULAR LOCATION</scope>
</reference>
<reference key="18">
    <citation type="journal article" date="2007" name="Electrophoresis">
        <title>Toward a global characterization of the phosphoproteome in prostate cancer cells: identification of phosphoproteins in the LNCaP cell line.</title>
        <authorList>
            <person name="Giorgianni F."/>
            <person name="Zhao Y."/>
            <person name="Desiderio D.M."/>
            <person name="Beranova-Giorgianni S."/>
        </authorList>
    </citation>
    <scope>IDENTIFICATION BY MASS SPECTROMETRY [LARGE SCALE ANALYSIS]</scope>
    <source>
        <tissue>Prostate cancer</tissue>
    </source>
</reference>
<reference key="19">
    <citation type="journal article" date="2007" name="Mol. Biol. Cell">
        <title>The transcriptional repressor Glis2 is a novel binding partner for p120 catenin.</title>
        <authorList>
            <person name="Hosking C.R."/>
            <person name="Ulloa F."/>
            <person name="Hogan C."/>
            <person name="Ferber E.C."/>
            <person name="Figueroa A."/>
            <person name="Gevaert K."/>
            <person name="Birchmeier W."/>
            <person name="Briscoe J."/>
            <person name="Fujita Y."/>
        </authorList>
    </citation>
    <scope>INTERACTION WITH GLIS2</scope>
    <scope>FUNCTION</scope>
</reference>
<reference key="20">
    <citation type="journal article" date="2007" name="Mol. Cell. Biol.">
        <title>Specific phosphorylation of p120-catenin regulatory domain differently modulates its binding to RhoA.</title>
        <authorList>
            <person name="Castano J."/>
            <person name="Solanas G."/>
            <person name="Casagolda D."/>
            <person name="Raurell I."/>
            <person name="Villagrasa P."/>
            <person name="Bustelo X.R."/>
            <person name="Garcia de Herreros A."/>
            <person name="Dunach M."/>
        </authorList>
    </citation>
    <scope>PHOSPHORYLATION AT TYR-112 BY FYN</scope>
</reference>
<reference key="21">
    <citation type="journal article" date="2008" name="Exp. Cell Res.">
        <title>P120-catenin is a novel desmoglein 3 interacting partner: identification of the p120-catenin association site of desmoglein 3.</title>
        <authorList>
            <person name="Kanno M."/>
            <person name="Isa Y."/>
            <person name="Aoyama Y."/>
            <person name="Yamamoto Y."/>
            <person name="Nagai M."/>
            <person name="Ozawa M."/>
            <person name="Kitajima Y."/>
        </authorList>
    </citation>
    <scope>FUNCTION</scope>
    <scope>INTERACTION WITH DSG3</scope>
    <scope>SUBCELLULAR LOCATION</scope>
</reference>
<reference key="22">
    <citation type="journal article" date="2008" name="J. Proteome Res.">
        <title>Combining protein-based IMAC, peptide-based IMAC, and MudPIT for efficient phosphoproteomic analysis.</title>
        <authorList>
            <person name="Cantin G.T."/>
            <person name="Yi W."/>
            <person name="Lu B."/>
            <person name="Park S.K."/>
            <person name="Xu T."/>
            <person name="Lee J.-D."/>
            <person name="Yates J.R. III"/>
        </authorList>
    </citation>
    <scope>PHOSPHORYLATION [LARGE SCALE ANALYSIS] AT SER-288</scope>
    <scope>IDENTIFICATION BY MASS SPECTROMETRY [LARGE SCALE ANALYSIS]</scope>
    <source>
        <tissue>Cervix carcinoma</tissue>
    </source>
</reference>
<reference key="23">
    <citation type="journal article" date="2008" name="Proc. Natl. Acad. Sci. U.S.A.">
        <title>A quantitative atlas of mitotic phosphorylation.</title>
        <authorList>
            <person name="Dephoure N."/>
            <person name="Zhou C."/>
            <person name="Villen J."/>
            <person name="Beausoleil S.A."/>
            <person name="Bakalarski C.E."/>
            <person name="Elledge S.J."/>
            <person name="Gygi S.P."/>
        </authorList>
    </citation>
    <scope>PHOSPHORYLATION [LARGE SCALE ANALYSIS] AT SER-47; SER-230 AND SER-288</scope>
    <scope>PHOSPHORYLATION [LARGE SCALE ANALYSIS] AT THR-889 (ISOFORM 1)</scope>
    <scope>PHOSPHORYLATION [LARGE SCALE ANALYSIS] AT THR-910 (ISOFORM 1A)</scope>
    <scope>PHOSPHORYLATION [LARGE SCALE ANALYSIS] AT THR-916 (ISOFORM 1AC)</scope>
    <scope>PHOSPHORYLATION [LARGE SCALE ANALYSIS] AT THR-895 (ISOFORM 1C)</scope>
    <scope>PHOSPHORYLATION [LARGE SCALE ANALYSIS] AT THR-835 (ISOFORM 2)</scope>
    <scope>PHOSPHORYLATION [LARGE SCALE ANALYSIS] AT THR-856 (ISOFORM 2A)</scope>
    <scope>PHOSPHORYLATION [LARGE SCALE ANALYSIS] AT THR-862 (ISOFORM 2AC)</scope>
    <scope>PHOSPHORYLATION [LARGE SCALE ANALYSIS] AT THR-841 (ISOFORM 2C)</scope>
    <scope>PHOSPHORYLATION [LARGE SCALE ANALYSIS] AT THR-788 (ISOFORM 3)</scope>
    <scope>PHOSPHORYLATION [LARGE SCALE ANALYSIS] AT THR-809 (ISOFORM 3A)</scope>
    <scope>PHOSPHORYLATION [LARGE SCALE ANALYSIS] AT THR-815 (ISOFORM 3AC)</scope>
    <scope>PHOSPHORYLATION [LARGE SCALE ANALYSIS] AT THR-794 (ISOFORM 3C)</scope>
    <scope>PHOSPHORYLATION [LARGE SCALE ANALYSIS] AT THR-566 (ISOFORM 4)</scope>
    <scope>PHOSPHORYLATION [LARGE SCALE ANALYSIS] AT THR-587 (ISOFORM 4A)</scope>
    <scope>PHOSPHORYLATION [LARGE SCALE ANALYSIS] AT THR-593 (ISOFORM 4AC)</scope>
    <scope>PHOSPHORYLATION [LARGE SCALE ANALYSIS] AT THR-572 (ISOFORM 4C)</scope>
    <scope>IDENTIFICATION BY MASS SPECTROMETRY [LARGE SCALE ANALYSIS]</scope>
    <source>
        <tissue>Cervix carcinoma</tissue>
    </source>
</reference>
<reference key="24">
    <citation type="journal article" date="2009" name="Anal. Chem.">
        <title>Lys-N and trypsin cover complementary parts of the phosphoproteome in a refined SCX-based approach.</title>
        <authorList>
            <person name="Gauci S."/>
            <person name="Helbig A.O."/>
            <person name="Slijper M."/>
            <person name="Krijgsveld J."/>
            <person name="Heck A.J."/>
            <person name="Mohammed S."/>
        </authorList>
    </citation>
    <scope>IDENTIFICATION BY MASS SPECTROMETRY [LARGE SCALE ANALYSIS]</scope>
</reference>
<reference key="25">
    <citation type="journal article" date="2010" name="J. Cell. Biochem.">
        <title>p120-catenin is a binding partner and substrate for Group B Pak kinases.</title>
        <authorList>
            <person name="Wong L.E."/>
            <person name="Reynolds A.B."/>
            <person name="Dissanayaka N.T."/>
            <person name="Minden A."/>
        </authorList>
    </citation>
    <scope>PHOSPHORYLATION AT SER-288 BY PAK5</scope>
</reference>
<reference key="26">
    <citation type="journal article" date="2010" name="Mol. Cell. Biol.">
        <title>Lipid phosphate phosphatase 3 stabilization of beta-catenin induces endothelial cell migration and formation of branching point structures.</title>
        <authorList>
            <person name="Humtsoe J.O."/>
            <person name="Liu M."/>
            <person name="Malik A.B."/>
            <person name="Wary K.K."/>
        </authorList>
    </citation>
    <scope>INTERACTION WITH PLPP3</scope>
</reference>
<reference key="27">
    <citation type="journal article" date="2010" name="Sci. Signal.">
        <title>Quantitative phosphoproteomics reveals widespread full phosphorylation site occupancy during mitosis.</title>
        <authorList>
            <person name="Olsen J.V."/>
            <person name="Vermeulen M."/>
            <person name="Santamaria A."/>
            <person name="Kumar C."/>
            <person name="Miller M.L."/>
            <person name="Jensen L.J."/>
            <person name="Gnad F."/>
            <person name="Cox J."/>
            <person name="Jensen T.S."/>
            <person name="Nigg E.A."/>
            <person name="Brunak S."/>
            <person name="Mann M."/>
        </authorList>
    </citation>
    <scope>ACETYLATION [LARGE SCALE ANALYSIS] AT MET-1</scope>
    <scope>PHOSPHORYLATION [LARGE SCALE ANALYSIS] AT SER-4; SER-47; SER-811; THR-916 AND SER-920</scope>
    <scope>IDENTIFICATION BY MASS SPECTROMETRY [LARGE SCALE ANALYSIS]</scope>
    <source>
        <tissue>Cervix carcinoma</tissue>
    </source>
</reference>
<reference key="28">
    <citation type="journal article" date="2011" name="BMC Syst. Biol.">
        <title>Initial characterization of the human central proteome.</title>
        <authorList>
            <person name="Burkard T.R."/>
            <person name="Planyavsky M."/>
            <person name="Kaupe I."/>
            <person name="Breitwieser F.P."/>
            <person name="Buerckstuemmer T."/>
            <person name="Bennett K.L."/>
            <person name="Superti-Furga G."/>
            <person name="Colinge J."/>
        </authorList>
    </citation>
    <scope>IDENTIFICATION BY MASS SPECTROMETRY [LARGE SCALE ANALYSIS]</scope>
</reference>
<reference key="29">
    <citation type="journal article" date="2011" name="Sci. Signal.">
        <title>System-wide temporal characterization of the proteome and phosphoproteome of human embryonic stem cell differentiation.</title>
        <authorList>
            <person name="Rigbolt K.T."/>
            <person name="Prokhorova T.A."/>
            <person name="Akimov V."/>
            <person name="Henningsen J."/>
            <person name="Johansen P.T."/>
            <person name="Kratchmarova I."/>
            <person name="Kassem M."/>
            <person name="Mann M."/>
            <person name="Olsen J.V."/>
            <person name="Blagoev B."/>
        </authorList>
    </citation>
    <scope>PHOSPHORYLATION [LARGE SCALE ANALYSIS] AT SER-230; SER-320; SER-349; SER-847; SER-857; SER-859; SER-864; SER-879 AND SER-920</scope>
    <scope>IDENTIFICATION BY MASS SPECTROMETRY [LARGE SCALE ANALYSIS]</scope>
</reference>
<reference key="30">
    <citation type="journal article" date="2012" name="Mol. Cell. Proteomics">
        <title>Comparative large-scale characterisation of plant vs. mammal proteins reveals similar and idiosyncratic N-alpha acetylation features.</title>
        <authorList>
            <person name="Bienvenut W.V."/>
            <person name="Sumpton D."/>
            <person name="Martinez A."/>
            <person name="Lilla S."/>
            <person name="Espagne C."/>
            <person name="Meinnel T."/>
            <person name="Giglione C."/>
        </authorList>
    </citation>
    <scope>ACETYLATION [LARGE SCALE ANALYSIS] AT MET-1</scope>
    <scope>IDENTIFICATION BY MASS SPECTROMETRY [LARGE SCALE ANALYSIS]</scope>
</reference>
<reference key="31">
    <citation type="journal article" date="2012" name="Proc. Natl. Acad. Sci. U.S.A.">
        <title>N-terminal acetylome analyses and functional insights of the N-terminal acetyltransferase NatB.</title>
        <authorList>
            <person name="Van Damme P."/>
            <person name="Lasa M."/>
            <person name="Polevoda B."/>
            <person name="Gazquez C."/>
            <person name="Elosegui-Artola A."/>
            <person name="Kim D.S."/>
            <person name="De Juan-Pardo E."/>
            <person name="Demeyer K."/>
            <person name="Hole K."/>
            <person name="Larrea E."/>
            <person name="Timmerman E."/>
            <person name="Prieto J."/>
            <person name="Arnesen T."/>
            <person name="Sherman F."/>
            <person name="Gevaert K."/>
            <person name="Aldabe R."/>
        </authorList>
    </citation>
    <scope>ACETYLATION [LARGE SCALE ANALYSIS] AT MET-1</scope>
    <scope>IDENTIFICATION BY MASS SPECTROMETRY [LARGE SCALE ANALYSIS]</scope>
</reference>
<reference key="32">
    <citation type="journal article" date="2013" name="J. Proteome Res.">
        <title>Toward a comprehensive characterization of a human cancer cell phosphoproteome.</title>
        <authorList>
            <person name="Zhou H."/>
            <person name="Di Palma S."/>
            <person name="Preisinger C."/>
            <person name="Peng M."/>
            <person name="Polat A.N."/>
            <person name="Heck A.J."/>
            <person name="Mohammed S."/>
        </authorList>
    </citation>
    <scope>PHOSPHORYLATION [LARGE SCALE ANALYSIS] AT SER-4; SER-47; THR-59; SER-252; SER-268; SER-269; SER-288; SER-346; SER-349; SER-352; SER-861; SER-864; THR-869; THR-906 AND SER-920</scope>
    <scope>IDENTIFICATION BY MASS SPECTROMETRY [LARGE SCALE ANALYSIS]</scope>
    <source>
        <tissue>Cervix carcinoma</tissue>
        <tissue>Erythroleukemia</tissue>
    </source>
</reference>
<reference key="33">
    <citation type="journal article" date="2014" name="J. Proteomics">
        <title>An enzyme assisted RP-RPLC approach for in-depth analysis of human liver phosphoproteome.</title>
        <authorList>
            <person name="Bian Y."/>
            <person name="Song C."/>
            <person name="Cheng K."/>
            <person name="Dong M."/>
            <person name="Wang F."/>
            <person name="Huang J."/>
            <person name="Sun D."/>
            <person name="Wang L."/>
            <person name="Ye M."/>
            <person name="Zou H."/>
        </authorList>
    </citation>
    <scope>PHOSPHORYLATION [LARGE SCALE ANALYSIS] AT SER-125; SER-225; SER-252; SER-268; SER-269; SER-346; SER-349; SER-352; SER-617; SER-847; SER-857; SER-864; TYR-865; SER-868; THR-869; SER-920 AND SER-943</scope>
    <scope>IDENTIFICATION BY MASS SPECTROMETRY [LARGE SCALE ANALYSIS]</scope>
    <source>
        <tissue>Liver</tissue>
    </source>
</reference>
<reference key="34">
    <citation type="journal article" date="2014" name="Mol. Biol. Cell">
        <title>DIPA-family coiled-coils bind conserved isoform-specific head domain of p120-catenin family: potential roles in hydrocephalus and heterotopia.</title>
        <authorList>
            <person name="Markham N.O."/>
            <person name="Doll C.A."/>
            <person name="Dohn M.R."/>
            <person name="Miller R.K."/>
            <person name="Yu H."/>
            <person name="Coffey R.J."/>
            <person name="McCrea P.D."/>
            <person name="Gamse J.T."/>
            <person name="Reynolds A.B."/>
        </authorList>
    </citation>
    <scope>INTERACTION WITH CCDC85B</scope>
    <scope>REGION</scope>
</reference>
<reference key="35">
    <citation type="journal article" date="2017" name="Genet. Med.">
        <title>Blepharocheilodontic syndrome is a CDH1 pathway-related disorder due to mutations in CDH1 and CTNND1.</title>
        <authorList>
            <person name="Ghoumid J."/>
            <person name="Stichelbout M."/>
            <person name="Jourdain A.S."/>
            <person name="Frenois F."/>
            <person name="Lejeune-Dumoulin S."/>
            <person name="Alex-Cordier M.P."/>
            <person name="Lebrun M."/>
            <person name="Guerreschi P."/>
            <person name="Duquennoy-Martinot V."/>
            <person name="Vinchon M."/>
            <person name="Ferri J."/>
            <person name="Jung M."/>
            <person name="Vicaire S."/>
            <person name="Vanlerberghe C."/>
            <person name="Escande F."/>
            <person name="Petit F."/>
            <person name="Manouvrier-Hanu S."/>
        </authorList>
    </citation>
    <scope>INVOLVEMENT IN BCDS2</scope>
    <scope>VARIANTS BCDS2 365-GLN--ILE-968 DEL AND 700-ARG--ILE-968 DEL</scope>
</reference>
<reference key="36">
    <citation type="journal article" date="2017" name="Mucosal Immunol.">
        <title>Cadherin 26 is an alpha integrin-binding epithelial receptor regulated during allergic inflammation.</title>
        <authorList>
            <person name="Caldwell J.M."/>
            <person name="Collins M.H."/>
            <person name="Kemme K.A."/>
            <person name="Sherrill J.D."/>
            <person name="Wen T."/>
            <person name="Rochman M."/>
            <person name="Stucke E.M."/>
            <person name="Amin L."/>
            <person name="Tai H."/>
            <person name="Putnam P.E."/>
            <person name="Jimenez-Dalmaroni M.J."/>
            <person name="Wormald M.R."/>
            <person name="Porollo A."/>
            <person name="Abonia J.P."/>
            <person name="Rothenberg M.E."/>
        </authorList>
    </citation>
    <scope>IDENTIFICATION IN A CADHERIN/CATENIN ADHESION COMPLEX</scope>
</reference>
<reference key="37">
    <citation type="journal article" date="2017" name="Nat. Struct. Mol. Biol.">
        <title>Site-specific mapping of the human SUMO proteome reveals co-modification with phosphorylation.</title>
        <authorList>
            <person name="Hendriks I.A."/>
            <person name="Lyon D."/>
            <person name="Young C."/>
            <person name="Jensen L.J."/>
            <person name="Vertegaal A.C."/>
            <person name="Nielsen M.L."/>
        </authorList>
    </citation>
    <scope>SUMOYLATION [LARGE SCALE ANALYSIS] AT LYS-421; LYS-517 AND LYS-882</scope>
    <scope>IDENTIFICATION BY MASS SPECTROMETRY [LARGE SCALE ANALYSIS]</scope>
</reference>
<reference key="38">
    <citation type="journal article" date="2010" name="Cell">
        <title>Dynamic and static interactions between p120 catenin and E-cadherin regulate the stability of cell-cell adhesion.</title>
        <authorList>
            <person name="Ishiyama N."/>
            <person name="Lee S.H."/>
            <person name="Liu S."/>
            <person name="Li G.Y."/>
            <person name="Smith M.J."/>
            <person name="Reichardt L.F."/>
            <person name="Ikura M."/>
        </authorList>
    </citation>
    <scope>X-RAY CRYSTALLOGRAPHY (2.4 ANGSTROMS) OF 324-937 IN COMPLEX WITH CDH1</scope>
    <scope>FUNCTION</scope>
    <scope>SUBUNIT</scope>
    <scope>SITE</scope>
    <scope>MUTAGENESIS OF TRP-363; LYS-401; LYS-444; TRP-477 AND ASN-478</scope>
</reference>